<dbReference type="EMBL" id="AF222983">
    <property type="protein sequence ID" value="AAF73874.1"/>
    <property type="molecule type" value="Genomic_DNA"/>
</dbReference>
<dbReference type="EMBL" id="AF222987">
    <property type="protein sequence ID" value="AAF73877.1"/>
    <property type="molecule type" value="Genomic_DNA"/>
</dbReference>
<dbReference type="EMBL" id="AF222980">
    <property type="protein sequence ID" value="AAF73889.1"/>
    <property type="molecule type" value="mRNA"/>
</dbReference>
<dbReference type="EMBL" id="AJ506178">
    <property type="protein sequence ID" value="CAD44628.1"/>
    <property type="molecule type" value="mRNA"/>
</dbReference>
<dbReference type="EMBL" id="AJ506177">
    <property type="protein sequence ID" value="CAD44631.1"/>
    <property type="molecule type" value="mRNA"/>
</dbReference>
<dbReference type="EMBL" id="AB007926">
    <property type="protein sequence ID" value="BAA32302.1"/>
    <property type="status" value="ALT_INIT"/>
    <property type="molecule type" value="mRNA"/>
</dbReference>
<dbReference type="EMBL" id="FJ804174">
    <property type="protein sequence ID" value="ACR40040.1"/>
    <property type="molecule type" value="mRNA"/>
</dbReference>
<dbReference type="EMBL" id="FJ804178">
    <property type="protein sequence ID" value="ACR40044.1"/>
    <property type="molecule type" value="mRNA"/>
</dbReference>
<dbReference type="EMBL" id="FJ804180">
    <property type="protein sequence ID" value="ACR40046.1"/>
    <property type="molecule type" value="mRNA"/>
</dbReference>
<dbReference type="EMBL" id="FJ804182">
    <property type="protein sequence ID" value="ACR40048.1"/>
    <property type="molecule type" value="mRNA"/>
</dbReference>
<dbReference type="EMBL" id="FJ804184">
    <property type="protein sequence ID" value="ACR40050.1"/>
    <property type="molecule type" value="mRNA"/>
</dbReference>
<dbReference type="EMBL" id="FJ804186">
    <property type="protein sequence ID" value="ACR40052.1"/>
    <property type="molecule type" value="mRNA"/>
</dbReference>
<dbReference type="EMBL" id="FJ804190">
    <property type="protein sequence ID" value="ACR40056.1"/>
    <property type="molecule type" value="mRNA"/>
</dbReference>
<dbReference type="EMBL" id="FJ804191">
    <property type="protein sequence ID" value="ACR40057.1"/>
    <property type="molecule type" value="mRNA"/>
</dbReference>
<dbReference type="EMBL" id="FJ804196">
    <property type="protein sequence ID" value="ACR40062.1"/>
    <property type="molecule type" value="mRNA"/>
</dbReference>
<dbReference type="EMBL" id="FJ804197">
    <property type="protein sequence ID" value="ACR40063.1"/>
    <property type="molecule type" value="mRNA"/>
</dbReference>
<dbReference type="EMBL" id="FJ804199">
    <property type="protein sequence ID" value="ACR40065.1"/>
    <property type="molecule type" value="mRNA"/>
</dbReference>
<dbReference type="EMBL" id="FJ804200">
    <property type="protein sequence ID" value="ACR40066.1"/>
    <property type="molecule type" value="mRNA"/>
</dbReference>
<dbReference type="EMBL" id="FJ804203">
    <property type="protein sequence ID" value="ACR40069.1"/>
    <property type="molecule type" value="mRNA"/>
</dbReference>
<dbReference type="EMBL" id="FJ804204">
    <property type="protein sequence ID" value="ACR40070.1"/>
    <property type="molecule type" value="mRNA"/>
</dbReference>
<dbReference type="EMBL" id="FJ804205">
    <property type="protein sequence ID" value="ACR40071.1"/>
    <property type="molecule type" value="mRNA"/>
</dbReference>
<dbReference type="EMBL" id="FJ804208">
    <property type="protein sequence ID" value="ACR40074.1"/>
    <property type="molecule type" value="mRNA"/>
</dbReference>
<dbReference type="EMBL" id="FJ804212">
    <property type="protein sequence ID" value="ACR40078.1"/>
    <property type="molecule type" value="mRNA"/>
</dbReference>
<dbReference type="EMBL" id="AL136171">
    <property type="status" value="NOT_ANNOTATED_CDS"/>
    <property type="molecule type" value="Genomic_DNA"/>
</dbReference>
<dbReference type="EMBL" id="AL161743">
    <property type="status" value="NOT_ANNOTATED_CDS"/>
    <property type="molecule type" value="Genomic_DNA"/>
</dbReference>
<dbReference type="EMBL" id="AL359543">
    <property type="status" value="NOT_ANNOTATED_CDS"/>
    <property type="molecule type" value="Genomic_DNA"/>
</dbReference>
<dbReference type="EMBL" id="AL450284">
    <property type="status" value="NOT_ANNOTATED_CDS"/>
    <property type="molecule type" value="Genomic_DNA"/>
</dbReference>
<dbReference type="EMBL" id="AL445200">
    <property type="status" value="NOT_ANNOTATED_CDS"/>
    <property type="molecule type" value="Genomic_DNA"/>
</dbReference>
<dbReference type="EMBL" id="AL626763">
    <property type="status" value="NOT_ANNOTATED_CDS"/>
    <property type="molecule type" value="Genomic_DNA"/>
</dbReference>
<dbReference type="EMBL" id="AL751364">
    <property type="status" value="NOT_ANNOTATED_CDS"/>
    <property type="molecule type" value="Genomic_DNA"/>
</dbReference>
<dbReference type="EMBL" id="KF455159">
    <property type="status" value="NOT_ANNOTATED_CDS"/>
    <property type="molecule type" value="Genomic_DNA"/>
</dbReference>
<dbReference type="EMBL" id="KF455161">
    <property type="status" value="NOT_ANNOTATED_CDS"/>
    <property type="molecule type" value="Genomic_DNA"/>
</dbReference>
<dbReference type="CCDS" id="CCDS31055.1">
    <molecule id="Q9NRI5-3"/>
</dbReference>
<dbReference type="CCDS" id="CCDS31056.1">
    <molecule id="Q9NRI5-4"/>
</dbReference>
<dbReference type="CCDS" id="CCDS53482.1">
    <molecule id="Q9NRI5-5"/>
</dbReference>
<dbReference type="CCDS" id="CCDS53483.1">
    <molecule id="Q9NRI5-8"/>
</dbReference>
<dbReference type="CCDS" id="CCDS53484.1">
    <molecule id="Q9NRI5-6"/>
</dbReference>
<dbReference type="CCDS" id="CCDS53485.1">
    <molecule id="Q9NRI5-7"/>
</dbReference>
<dbReference type="CCDS" id="CCDS59205.1">
    <molecule id="Q9NRI5-9"/>
</dbReference>
<dbReference type="CCDS" id="CCDS59206.1">
    <molecule id="Q9NRI5-10"/>
</dbReference>
<dbReference type="CCDS" id="CCDS59207.1">
    <molecule id="Q9NRI5-11"/>
</dbReference>
<dbReference type="CCDS" id="CCDS86058.1">
    <molecule id="Q9NRI5-2"/>
</dbReference>
<dbReference type="CCDS" id="CCDS86059.1">
    <molecule id="Q9NRI5-1"/>
</dbReference>
<dbReference type="PIR" id="T00071">
    <property type="entry name" value="T00071"/>
</dbReference>
<dbReference type="RefSeq" id="NP_001012975.1">
    <molecule id="Q9NRI5-2"/>
    <property type="nucleotide sequence ID" value="NM_001012957.2"/>
</dbReference>
<dbReference type="RefSeq" id="NP_001012976.1">
    <molecule id="Q9NRI5-4"/>
    <property type="nucleotide sequence ID" value="NM_001012958.2"/>
</dbReference>
<dbReference type="RefSeq" id="NP_001012977.1">
    <molecule id="Q9NRI5-3"/>
    <property type="nucleotide sequence ID" value="NM_001012959.2"/>
</dbReference>
<dbReference type="RefSeq" id="NP_001158011.1">
    <molecule id="Q9NRI5-5"/>
    <property type="nucleotide sequence ID" value="NM_001164539.2"/>
</dbReference>
<dbReference type="RefSeq" id="NP_001158013.1">
    <molecule id="Q9NRI5-8"/>
    <property type="nucleotide sequence ID" value="NM_001164541.2"/>
</dbReference>
<dbReference type="RefSeq" id="NP_001158016.1">
    <molecule id="Q9NRI5-9"/>
    <property type="nucleotide sequence ID" value="NM_001164544.2"/>
</dbReference>
<dbReference type="RefSeq" id="NP_001158017.1">
    <molecule id="Q9NRI5-6"/>
    <property type="nucleotide sequence ID" value="NM_001164545.2"/>
</dbReference>
<dbReference type="RefSeq" id="NP_001158018.1">
    <molecule id="Q9NRI5-7"/>
    <property type="nucleotide sequence ID" value="NM_001164546.2"/>
</dbReference>
<dbReference type="RefSeq" id="NP_001158019.1">
    <molecule id="Q9NRI5-7"/>
    <property type="nucleotide sequence ID" value="NM_001164547.2"/>
</dbReference>
<dbReference type="RefSeq" id="NP_001158027.1">
    <molecule id="Q9NRI5-10"/>
    <property type="nucleotide sequence ID" value="NM_001164555.2"/>
</dbReference>
<dbReference type="RefSeq" id="NP_001158028.1">
    <molecule id="Q9NRI5-11"/>
    <property type="nucleotide sequence ID" value="NM_001164556.2"/>
</dbReference>
<dbReference type="RefSeq" id="NP_061132.2">
    <molecule id="Q9NRI5-1"/>
    <property type="nucleotide sequence ID" value="NM_018662.3"/>
</dbReference>
<dbReference type="PDB" id="5V4B">
    <property type="method" value="X-ray"/>
    <property type="resolution" value="2.60 A"/>
    <property type="chains" value="C=193-207"/>
</dbReference>
<dbReference type="PDBsum" id="5V4B"/>
<dbReference type="SASBDB" id="Q9NRI5"/>
<dbReference type="SMR" id="Q9NRI5"/>
<dbReference type="BioGRID" id="118061">
    <property type="interactions" value="425"/>
</dbReference>
<dbReference type="CORUM" id="Q9NRI5"/>
<dbReference type="DIP" id="DIP-33828N"/>
<dbReference type="ELM" id="Q9NRI5"/>
<dbReference type="FunCoup" id="Q9NRI5">
    <property type="interactions" value="765"/>
</dbReference>
<dbReference type="IntAct" id="Q9NRI5">
    <property type="interactions" value="999"/>
</dbReference>
<dbReference type="MINT" id="Q9NRI5"/>
<dbReference type="STRING" id="9606.ENSP00000403888"/>
<dbReference type="MoonDB" id="Q9NRI5">
    <property type="type" value="Predicted"/>
</dbReference>
<dbReference type="GlyGen" id="Q9NRI5">
    <property type="glycosylation" value="1 site"/>
</dbReference>
<dbReference type="iPTMnet" id="Q9NRI5"/>
<dbReference type="PhosphoSitePlus" id="Q9NRI5"/>
<dbReference type="BioMuta" id="DISC1"/>
<dbReference type="DMDM" id="160332362"/>
<dbReference type="jPOST" id="Q9NRI5"/>
<dbReference type="MassIVE" id="Q9NRI5"/>
<dbReference type="PaxDb" id="9606-ENSP00000355593"/>
<dbReference type="PeptideAtlas" id="Q9NRI5"/>
<dbReference type="ProteomicsDB" id="82365">
    <molecule id="Q9NRI5-1"/>
</dbReference>
<dbReference type="ProteomicsDB" id="82366">
    <molecule id="Q9NRI5-2"/>
</dbReference>
<dbReference type="ProteomicsDB" id="82367">
    <molecule id="Q9NRI5-3"/>
</dbReference>
<dbReference type="ProteomicsDB" id="82368">
    <molecule id="Q9NRI5-4"/>
</dbReference>
<dbReference type="ProteomicsDB" id="82369">
    <molecule id="Q9NRI5-5"/>
</dbReference>
<dbReference type="ProteomicsDB" id="82370">
    <molecule id="Q9NRI5-6"/>
</dbReference>
<dbReference type="ProteomicsDB" id="82371">
    <molecule id="Q9NRI5-7"/>
</dbReference>
<dbReference type="ProteomicsDB" id="82372">
    <molecule id="Q9NRI5-8"/>
</dbReference>
<dbReference type="Antibodypedia" id="34687">
    <property type="antibodies" value="628 antibodies from 38 providers"/>
</dbReference>
<dbReference type="DNASU" id="27185"/>
<dbReference type="Ensembl" id="ENST00000317586.8">
    <molecule id="Q9NRI5-4"/>
    <property type="protein sequence ID" value="ENSP00000320784.4"/>
    <property type="gene ID" value="ENSG00000162946.24"/>
</dbReference>
<dbReference type="Ensembl" id="ENST00000366633.7">
    <molecule id="Q9NRI5-5"/>
    <property type="protein sequence ID" value="ENSP00000355593.3"/>
    <property type="gene ID" value="ENSG00000162946.24"/>
</dbReference>
<dbReference type="Ensembl" id="ENST00000366636.8">
    <molecule id="Q9NRI5-3"/>
    <property type="protein sequence ID" value="ENSP00000355596.4"/>
    <property type="gene ID" value="ENSG00000162946.24"/>
</dbReference>
<dbReference type="Ensembl" id="ENST00000366637.8">
    <molecule id="Q9NRI5-2"/>
    <property type="protein sequence ID" value="ENSP00000355597.6"/>
    <property type="gene ID" value="ENSG00000162946.24"/>
</dbReference>
<dbReference type="Ensembl" id="ENST00000439617.8">
    <molecule id="Q9NRI5-1"/>
    <property type="protein sequence ID" value="ENSP00000403888.4"/>
    <property type="gene ID" value="ENSG00000162946.24"/>
</dbReference>
<dbReference type="Ensembl" id="ENST00000535983.5">
    <molecule id="Q9NRI5-8"/>
    <property type="protein sequence ID" value="ENSP00000443996.1"/>
    <property type="gene ID" value="ENSG00000162946.24"/>
</dbReference>
<dbReference type="Ensembl" id="ENST00000539444.5">
    <molecule id="Q9NRI5-6"/>
    <property type="protein sequence ID" value="ENSP00000440953.1"/>
    <property type="gene ID" value="ENSG00000162946.24"/>
</dbReference>
<dbReference type="Ensembl" id="ENST00000602281.5">
    <molecule id="Q9NRI5-9"/>
    <property type="protein sequence ID" value="ENSP00000473425.1"/>
    <property type="gene ID" value="ENSG00000162946.24"/>
</dbReference>
<dbReference type="Ensembl" id="ENST00000602700.5">
    <molecule id="Q9NRI5-10"/>
    <property type="protein sequence ID" value="ENSP00000473417.1"/>
    <property type="gene ID" value="ENSG00000162946.24"/>
</dbReference>
<dbReference type="Ensembl" id="ENST00000602713.5">
    <molecule id="Q9NRI5-10"/>
    <property type="protein sequence ID" value="ENSP00000473261.1"/>
    <property type="gene ID" value="ENSG00000162946.24"/>
</dbReference>
<dbReference type="Ensembl" id="ENST00000602822.5">
    <molecule id="Q9NRI5-10"/>
    <property type="protein sequence ID" value="ENSP00000473586.1"/>
    <property type="gene ID" value="ENSG00000162946.24"/>
</dbReference>
<dbReference type="Ensembl" id="ENST00000602873.5">
    <molecule id="Q9NRI5-11"/>
    <property type="protein sequence ID" value="ENSP00000473386.1"/>
    <property type="gene ID" value="ENSG00000162946.24"/>
</dbReference>
<dbReference type="Ensembl" id="ENST00000628350.2">
    <molecule id="Q9NRI5-7"/>
    <property type="protein sequence ID" value="ENSP00000487190.1"/>
    <property type="gene ID" value="ENSG00000162946.24"/>
</dbReference>
<dbReference type="GeneID" id="27185"/>
<dbReference type="KEGG" id="hsa:27185"/>
<dbReference type="MANE-Select" id="ENST00000439617.8">
    <property type="protein sequence ID" value="ENSP00000403888.4"/>
    <property type="RefSeq nucleotide sequence ID" value="NM_018662.3"/>
    <property type="RefSeq protein sequence ID" value="NP_061132.2"/>
</dbReference>
<dbReference type="UCSC" id="uc001hux.1">
    <molecule id="Q9NRI5-1"/>
    <property type="organism name" value="human"/>
</dbReference>
<dbReference type="AGR" id="HGNC:2888"/>
<dbReference type="CTD" id="27185"/>
<dbReference type="DisGeNET" id="27185"/>
<dbReference type="GeneCards" id="DISC1"/>
<dbReference type="HGNC" id="HGNC:2888">
    <property type="gene designation" value="DISC1"/>
</dbReference>
<dbReference type="HPA" id="ENSG00000162946">
    <property type="expression patterns" value="Tissue enhanced (retina)"/>
</dbReference>
<dbReference type="MalaCards" id="DISC1"/>
<dbReference type="MIM" id="604906">
    <property type="type" value="phenotype"/>
</dbReference>
<dbReference type="MIM" id="605210">
    <property type="type" value="gene"/>
</dbReference>
<dbReference type="neXtProt" id="NX_Q9NRI5"/>
<dbReference type="OpenTargets" id="ENSG00000162946"/>
<dbReference type="PharmGKB" id="PA27342"/>
<dbReference type="VEuPathDB" id="HostDB:ENSG00000162946"/>
<dbReference type="eggNOG" id="ENOG502S3S3">
    <property type="taxonomic scope" value="Eukaryota"/>
</dbReference>
<dbReference type="GeneTree" id="ENSGT00390000006176"/>
<dbReference type="HOGENOM" id="CLU_1514037_0_0_1"/>
<dbReference type="InParanoid" id="Q9NRI5"/>
<dbReference type="OMA" id="WTGKEEM"/>
<dbReference type="PAN-GO" id="Q9NRI5">
    <property type="GO annotations" value="6 GO annotations based on evolutionary models"/>
</dbReference>
<dbReference type="PhylomeDB" id="Q9NRI5"/>
<dbReference type="TreeFam" id="TF332357"/>
<dbReference type="PathwayCommons" id="Q9NRI5"/>
<dbReference type="SignaLink" id="Q9NRI5"/>
<dbReference type="SIGNOR" id="Q9NRI5"/>
<dbReference type="BioGRID-ORCS" id="27185">
    <property type="hits" value="7 hits in 1143 CRISPR screens"/>
</dbReference>
<dbReference type="CD-CODE" id="8C2F96ED">
    <property type="entry name" value="Centrosome"/>
</dbReference>
<dbReference type="CD-CODE" id="DEE660B4">
    <property type="entry name" value="Stress granule"/>
</dbReference>
<dbReference type="GeneWiki" id="DISC1"/>
<dbReference type="GenomeRNAi" id="27185"/>
<dbReference type="Pharos" id="Q9NRI5">
    <property type="development level" value="Tbio"/>
</dbReference>
<dbReference type="PRO" id="PR:Q9NRI5"/>
<dbReference type="Proteomes" id="UP000005640">
    <property type="component" value="Chromosome 1"/>
</dbReference>
<dbReference type="RNAct" id="Q9NRI5">
    <property type="molecule type" value="protein"/>
</dbReference>
<dbReference type="Bgee" id="ENSG00000162946">
    <property type="expression patterns" value="Expressed in buccal mucosa cell and 124 other cell types or tissues"/>
</dbReference>
<dbReference type="ExpressionAtlas" id="Q9NRI5">
    <property type="expression patterns" value="baseline and differential"/>
</dbReference>
<dbReference type="GO" id="GO:0044297">
    <property type="term" value="C:cell body"/>
    <property type="evidence" value="ECO:0007669"/>
    <property type="project" value="Ensembl"/>
</dbReference>
<dbReference type="GO" id="GO:0090724">
    <property type="term" value="C:central region of growth cone"/>
    <property type="evidence" value="ECO:0007669"/>
    <property type="project" value="Ensembl"/>
</dbReference>
<dbReference type="GO" id="GO:0005813">
    <property type="term" value="C:centrosome"/>
    <property type="evidence" value="ECO:0000314"/>
    <property type="project" value="UniProtKB"/>
</dbReference>
<dbReference type="GO" id="GO:0036064">
    <property type="term" value="C:ciliary basal body"/>
    <property type="evidence" value="ECO:0007669"/>
    <property type="project" value="Ensembl"/>
</dbReference>
<dbReference type="GO" id="GO:0097546">
    <property type="term" value="C:ciliary base"/>
    <property type="evidence" value="ECO:0000314"/>
    <property type="project" value="SYSCILIA_CCNET"/>
</dbReference>
<dbReference type="GO" id="GO:0005829">
    <property type="term" value="C:cytosol"/>
    <property type="evidence" value="ECO:0000314"/>
    <property type="project" value="HPA"/>
</dbReference>
<dbReference type="GO" id="GO:0030286">
    <property type="term" value="C:dynein complex"/>
    <property type="evidence" value="ECO:0007669"/>
    <property type="project" value="Ensembl"/>
</dbReference>
<dbReference type="GO" id="GO:0098982">
    <property type="term" value="C:GABA-ergic synapse"/>
    <property type="evidence" value="ECO:0000314"/>
    <property type="project" value="SynGO"/>
</dbReference>
<dbReference type="GO" id="GO:0098978">
    <property type="term" value="C:glutamatergic synapse"/>
    <property type="evidence" value="ECO:0000314"/>
    <property type="project" value="SynGO"/>
</dbReference>
<dbReference type="GO" id="GO:0045111">
    <property type="term" value="C:intermediate filament cytoskeleton"/>
    <property type="evidence" value="ECO:0000314"/>
    <property type="project" value="HPA"/>
</dbReference>
<dbReference type="GO" id="GO:0005871">
    <property type="term" value="C:kinesin complex"/>
    <property type="evidence" value="ECO:0007669"/>
    <property type="project" value="Ensembl"/>
</dbReference>
<dbReference type="GO" id="GO:0005874">
    <property type="term" value="C:microtubule"/>
    <property type="evidence" value="ECO:0000318"/>
    <property type="project" value="GO_Central"/>
</dbReference>
<dbReference type="GO" id="GO:0005815">
    <property type="term" value="C:microtubule organizing center"/>
    <property type="evidence" value="ECO:0000318"/>
    <property type="project" value="GO_Central"/>
</dbReference>
<dbReference type="GO" id="GO:0005739">
    <property type="term" value="C:mitochondrion"/>
    <property type="evidence" value="ECO:0000314"/>
    <property type="project" value="MGI"/>
</dbReference>
<dbReference type="GO" id="GO:0048471">
    <property type="term" value="C:perinuclear region of cytoplasm"/>
    <property type="evidence" value="ECO:0007669"/>
    <property type="project" value="Ensembl"/>
</dbReference>
<dbReference type="GO" id="GO:0014069">
    <property type="term" value="C:postsynaptic density"/>
    <property type="evidence" value="ECO:0000314"/>
    <property type="project" value="SynGO"/>
</dbReference>
<dbReference type="GO" id="GO:0098793">
    <property type="term" value="C:presynapse"/>
    <property type="evidence" value="ECO:0000314"/>
    <property type="project" value="SynGO"/>
</dbReference>
<dbReference type="GO" id="GO:0008021">
    <property type="term" value="C:synaptic vesicle"/>
    <property type="evidence" value="ECO:0007669"/>
    <property type="project" value="Ensembl"/>
</dbReference>
<dbReference type="GO" id="GO:0042802">
    <property type="term" value="F:identical protein binding"/>
    <property type="evidence" value="ECO:0000353"/>
    <property type="project" value="IntAct"/>
</dbReference>
<dbReference type="GO" id="GO:0019894">
    <property type="term" value="F:kinesin binding"/>
    <property type="evidence" value="ECO:0007669"/>
    <property type="project" value="Ensembl"/>
</dbReference>
<dbReference type="GO" id="GO:0060090">
    <property type="term" value="F:molecular adaptor activity"/>
    <property type="evidence" value="ECO:0007669"/>
    <property type="project" value="Ensembl"/>
</dbReference>
<dbReference type="GO" id="GO:0044877">
    <property type="term" value="F:protein-containing complex binding"/>
    <property type="evidence" value="ECO:0007669"/>
    <property type="project" value="Ensembl"/>
</dbReference>
<dbReference type="GO" id="GO:0060070">
    <property type="term" value="P:canonical Wnt signaling pathway"/>
    <property type="evidence" value="ECO:0007669"/>
    <property type="project" value="Ensembl"/>
</dbReference>
<dbReference type="GO" id="GO:0021846">
    <property type="term" value="P:cell proliferation in forebrain"/>
    <property type="evidence" value="ECO:0007669"/>
    <property type="project" value="Ensembl"/>
</dbReference>
<dbReference type="GO" id="GO:0060271">
    <property type="term" value="P:cilium assembly"/>
    <property type="evidence" value="ECO:0000318"/>
    <property type="project" value="GO_Central"/>
</dbReference>
<dbReference type="GO" id="GO:0050965">
    <property type="term" value="P:detection of temperature stimulus involved in sensory perception of pain"/>
    <property type="evidence" value="ECO:0007669"/>
    <property type="project" value="Ensembl"/>
</dbReference>
<dbReference type="GO" id="GO:0000226">
    <property type="term" value="P:microtubule cytoskeleton organization"/>
    <property type="evidence" value="ECO:0000315"/>
    <property type="project" value="UniProtKB"/>
</dbReference>
<dbReference type="GO" id="GO:0051560">
    <property type="term" value="P:mitochondrial calcium ion homeostasis"/>
    <property type="evidence" value="ECO:0007669"/>
    <property type="project" value="Ensembl"/>
</dbReference>
<dbReference type="GO" id="GO:0070050">
    <property type="term" value="P:neuron cellular homeostasis"/>
    <property type="evidence" value="ECO:0007669"/>
    <property type="project" value="Ensembl"/>
</dbReference>
<dbReference type="GO" id="GO:0001764">
    <property type="term" value="P:neuron migration"/>
    <property type="evidence" value="ECO:0000315"/>
    <property type="project" value="UniProtKB"/>
</dbReference>
<dbReference type="GO" id="GO:1905515">
    <property type="term" value="P:non-motile cilium assembly"/>
    <property type="evidence" value="ECO:0000315"/>
    <property type="project" value="SYSCILIA_CCNET"/>
</dbReference>
<dbReference type="GO" id="GO:0045773">
    <property type="term" value="P:positive regulation of axon extension"/>
    <property type="evidence" value="ECO:0007669"/>
    <property type="project" value="Ensembl"/>
</dbReference>
<dbReference type="GO" id="GO:0001954">
    <property type="term" value="P:positive regulation of cell-matrix adhesion"/>
    <property type="evidence" value="ECO:0007669"/>
    <property type="project" value="Ensembl"/>
</dbReference>
<dbReference type="GO" id="GO:0002052">
    <property type="term" value="P:positive regulation of neuroblast proliferation"/>
    <property type="evidence" value="ECO:0000316"/>
    <property type="project" value="UniProtKB"/>
</dbReference>
<dbReference type="GO" id="GO:0010976">
    <property type="term" value="P:positive regulation of neuron projection development"/>
    <property type="evidence" value="ECO:0007669"/>
    <property type="project" value="Ensembl"/>
</dbReference>
<dbReference type="GO" id="GO:2000060">
    <property type="term" value="P:positive regulation of ubiquitin-dependent protein catabolic process"/>
    <property type="evidence" value="ECO:0007669"/>
    <property type="project" value="Ensembl"/>
</dbReference>
<dbReference type="GO" id="GO:0030177">
    <property type="term" value="P:positive regulation of Wnt signaling pathway"/>
    <property type="evidence" value="ECO:0000316"/>
    <property type="project" value="UniProtKB"/>
</dbReference>
<dbReference type="GO" id="GO:0071539">
    <property type="term" value="P:protein localization to centrosome"/>
    <property type="evidence" value="ECO:0007669"/>
    <property type="project" value="Ensembl"/>
</dbReference>
<dbReference type="GO" id="GO:0021852">
    <property type="term" value="P:pyramidal neuron migration to cerebral cortex"/>
    <property type="evidence" value="ECO:0007669"/>
    <property type="project" value="Ensembl"/>
</dbReference>
<dbReference type="GO" id="GO:0060998">
    <property type="term" value="P:regulation of dendritic spine development"/>
    <property type="evidence" value="ECO:0007669"/>
    <property type="project" value="Ensembl"/>
</dbReference>
<dbReference type="GO" id="GO:0099175">
    <property type="term" value="P:regulation of postsynapse organization"/>
    <property type="evidence" value="ECO:0007669"/>
    <property type="project" value="Ensembl"/>
</dbReference>
<dbReference type="GO" id="GO:0090128">
    <property type="term" value="P:regulation of synapse maturation"/>
    <property type="evidence" value="ECO:0007669"/>
    <property type="project" value="Ensembl"/>
</dbReference>
<dbReference type="GO" id="GO:0051966">
    <property type="term" value="P:regulation of synaptic transmission, glutamatergic"/>
    <property type="evidence" value="ECO:0007669"/>
    <property type="project" value="Ensembl"/>
</dbReference>
<dbReference type="GO" id="GO:0051602">
    <property type="term" value="P:response to electrical stimulus"/>
    <property type="evidence" value="ECO:0007669"/>
    <property type="project" value="Ensembl"/>
</dbReference>
<dbReference type="GO" id="GO:0031929">
    <property type="term" value="P:TOR signaling"/>
    <property type="evidence" value="ECO:0007669"/>
    <property type="project" value="Ensembl"/>
</dbReference>
<dbReference type="GO" id="GO:0006511">
    <property type="term" value="P:ubiquitin-dependent protein catabolic process"/>
    <property type="evidence" value="ECO:0007669"/>
    <property type="project" value="Ensembl"/>
</dbReference>
<dbReference type="InterPro" id="IPR026081">
    <property type="entry name" value="DISC1"/>
</dbReference>
<dbReference type="PANTHER" id="PTHR14332">
    <property type="entry name" value="DISRUPTED IN SCHIZOPHRENIA 1 PROTEIN"/>
    <property type="match status" value="1"/>
</dbReference>
<dbReference type="PANTHER" id="PTHR14332:SF3">
    <property type="entry name" value="DISRUPTED IN SCHIZOPHRENIA 1 PROTEIN"/>
    <property type="match status" value="1"/>
</dbReference>
<dbReference type="SUPFAM" id="SSF46579">
    <property type="entry name" value="Prefoldin"/>
    <property type="match status" value="1"/>
</dbReference>
<comment type="function">
    <text evidence="1 18 19 20">Involved in the regulation of multiple aspects of embryonic and adult neurogenesis (PubMed:19303846, PubMed:19502360). Required for neural progenitor proliferation in the ventrical/subventrical zone during embryonic brain development and in the adult dentate gyrus of the hippocampus (By similarity). Participates in the Wnt-mediated neural progenitor proliferation as a positive regulator by modulating GSK3B activity and CTNNB1 abundance (PubMed:19303846). Plays a role as a modulator of the AKT-mTOR signaling pathway controlling the tempo of the process of newborn neurons integration during adult neurogenesis, including neuron positioning, dendritic development and synapse formation (By similarity). Inhibits the activation of AKT-mTOR signaling upon interaction with CCDC88A (By similarity). Regulates the migration of early-born granule cell precursors toward the dentate gyrus during the hippocampal development (PubMed:19502360). Inhibits ATF4 transcription factor activity in neurons by disrupting ATF4 dimerization and DNA-binding (By similarity). Plays a role, together with PCNT, in the microtubule network formation (PubMed:18955030).</text>
</comment>
<comment type="subunit">
    <text evidence="1 6 8 10 15 16 17 18 21 22">Interacts with NDEL1 (PubMed:12506198). Interacts with CCDC88A (via C-terminus); the interaction is direct. Interacts with GSK3B (By similarity). Interacts with tubulin alpha, ACTN2, ANKHD1, ATF4, ATF5, CEP63, EIF3S3, MAP1A, NDEL1, PAFAH1B1, RANBP9, SPTBN4, SYNE1 and TRAF3IP1 (PubMed:12812986). Interaction with microtubules may be mediated in part by TRAF3IP1. Interacts (via C-terminal) with PCNT (PubMed:18955030). Interacts with CHCHD6 (PubMed:22228767). Interacts with CCDC141 (By similarity). Interacts with FBXW7, the substrate-recognition component of a SCF (SKP1-CUL1-F-box protein) E3 ubiquitin-protein ligase complex; the interaction targets DISC1 for proteasomal degradation (PubMed:28727686). Interacts with ZNF365 (PubMed:17389905). Interacts with ATF4; inhibiting ATF4 transcription factor activity by disrupting ATF4 dimerization and DNA-binding (By similarity). Interacts with PDE4B (isoform PDE4B5) (PubMed:17519386).</text>
</comment>
<comment type="interaction">
    <interactant intactId="EBI-529989">
        <id>Q9NRI5</id>
    </interactant>
    <interactant intactId="EBI-77797">
        <id>P35609</id>
        <label>ACTN2</label>
    </interactant>
    <organismsDiffer>false</organismsDiffer>
    <experiments>4</experiments>
</comment>
<comment type="interaction">
    <interactant intactId="EBI-529989">
        <id>Q9NRI5</id>
    </interactant>
    <interactant intactId="EBI-1048311">
        <id>Q99996</id>
        <label>AKAP9</label>
    </interactant>
    <organismsDiffer>false</organismsDiffer>
    <experiments>2</experiments>
</comment>
<comment type="interaction">
    <interactant intactId="EBI-529989">
        <id>Q9NRI5</id>
    </interactant>
    <interactant intactId="EBI-308651">
        <id>Q8TCU4</id>
        <label>ALMS1</label>
    </interactant>
    <organismsDiffer>false</organismsDiffer>
    <experiments>3</experiments>
</comment>
<comment type="interaction">
    <interactant intactId="EBI-529989">
        <id>Q9NRI5</id>
    </interactant>
    <interactant intactId="EBI-12579907">
        <id>Q9UNK9</id>
        <label>ANGEL1</label>
    </interactant>
    <organismsDiffer>false</organismsDiffer>
    <experiments>3</experiments>
</comment>
<comment type="interaction">
    <interactant intactId="EBI-529989">
        <id>Q9NRI5</id>
    </interactant>
    <interactant intactId="EBI-1785446">
        <id>Q8IWZ3-1</id>
        <label>ANKHD1</label>
    </interactant>
    <organismsDiffer>false</organismsDiffer>
    <experiments>6</experiments>
</comment>
<comment type="interaction">
    <interactant intactId="EBI-529989">
        <id>Q9NRI5</id>
    </interactant>
    <interactant intactId="EBI-492498">
        <id>P18848</id>
        <label>ATF4</label>
    </interactant>
    <organismsDiffer>false</organismsDiffer>
    <experiments>4</experiments>
</comment>
<comment type="interaction">
    <interactant intactId="EBI-529989">
        <id>Q9NRI5</id>
    </interactant>
    <interactant intactId="EBI-492509">
        <id>Q9Y2D1</id>
        <label>ATF5</label>
    </interactant>
    <organismsDiffer>false</organismsDiffer>
    <experiments>8</experiments>
</comment>
<comment type="interaction">
    <interactant intactId="EBI-529989">
        <id>Q9NRI5</id>
    </interactant>
    <interactant intactId="EBI-928732">
        <id>Q6VMQ6</id>
        <label>ATF7IP</label>
    </interactant>
    <organismsDiffer>false</organismsDiffer>
    <experiments>3</experiments>
</comment>
<comment type="interaction">
    <interactant intactId="EBI-529989">
        <id>Q9NRI5</id>
    </interactant>
    <interactant intactId="EBI-928795">
        <id>Q6ZP82</id>
        <label>CCDC141</label>
    </interactant>
    <organismsDiffer>false</organismsDiffer>
    <experiments>5</experiments>
</comment>
<comment type="interaction">
    <interactant intactId="EBI-529989">
        <id>Q9NRI5</id>
    </interactant>
    <interactant intactId="EBI-1104799">
        <id>Q5SW79</id>
        <label>CEP170</label>
    </interactant>
    <organismsDiffer>false</organismsDiffer>
    <experiments>7</experiments>
</comment>
<comment type="interaction">
    <interactant intactId="EBI-529989">
        <id>Q9NRI5</id>
    </interactant>
    <interactant intactId="EBI-741977">
        <id>Q96MT8</id>
        <label>CEP63</label>
    </interactant>
    <organismsDiffer>false</organismsDiffer>
    <experiments>7</experiments>
</comment>
<comment type="interaction">
    <interactant intactId="EBI-529989">
        <id>Q9NRI5</id>
    </interactant>
    <interactant intactId="EBI-1104674">
        <id>P10909</id>
        <label>CLU</label>
    </interactant>
    <organismsDiffer>false</organismsDiffer>
    <experiments>4</experiments>
</comment>
<comment type="interaction">
    <interactant intactId="EBI-529989">
        <id>Q9NRI5</id>
    </interactant>
    <interactant intactId="EBI-928749">
        <id>P12110</id>
        <label>COL6A2</label>
    </interactant>
    <organismsDiffer>false</organismsDiffer>
    <experiments>3</experiments>
</comment>
<comment type="interaction">
    <interactant intactId="EBI-529989">
        <id>Q9NRI5</id>
    </interactant>
    <interactant intactId="EBI-529989">
        <id>Q9NRI5</id>
        <label>DISC1</label>
    </interactant>
    <organismsDiffer>false</organismsDiffer>
    <experiments>4</experiments>
</comment>
<comment type="interaction">
    <interactant intactId="EBI-529989">
        <id>Q9NRI5</id>
    </interactant>
    <interactant intactId="EBI-357552">
        <id>Q99615</id>
        <label>DNAJC7</label>
    </interactant>
    <organismsDiffer>false</organismsDiffer>
    <experiments>3</experiments>
</comment>
<comment type="interaction">
    <interactant intactId="EBI-529989">
        <id>Q9NRI5</id>
    </interactant>
    <interactant intactId="EBI-2928178">
        <id>P14416</id>
        <label>DRD2</label>
    </interactant>
    <organismsDiffer>false</organismsDiffer>
    <experiments>3</experiments>
</comment>
<comment type="interaction">
    <interactant intactId="EBI-529989">
        <id>Q9NRI5</id>
    </interactant>
    <interactant intactId="EBI-310758">
        <id>Q03001</id>
        <label>DST</label>
    </interactant>
    <organismsDiffer>false</organismsDiffer>
    <experiments>4</experiments>
</comment>
<comment type="interaction">
    <interactant intactId="EBI-529989">
        <id>Q9NRI5</id>
    </interactant>
    <interactant intactId="EBI-356015">
        <id>Q14204</id>
        <label>DYNC1H1</label>
    </interactant>
    <organismsDiffer>false</organismsDiffer>
    <experiments>4</experiments>
</comment>
<comment type="interaction">
    <interactant intactId="EBI-529989">
        <id>Q9NRI5</id>
    </interactant>
    <interactant intactId="EBI-709735">
        <id>O15372</id>
        <label>EIF3H</label>
    </interactant>
    <organismsDiffer>false</organismsDiffer>
    <experiments>6</experiments>
</comment>
<comment type="interaction">
    <interactant intactId="EBI-529989">
        <id>Q9NRI5</id>
    </interactant>
    <interactant intactId="EBI-923440">
        <id>Q8WXI9</id>
        <label>GATAD2B</label>
    </interactant>
    <organismsDiffer>false</organismsDiffer>
    <experiments>3</experiments>
</comment>
<comment type="interaction">
    <interactant intactId="EBI-529989">
        <id>Q9NRI5</id>
    </interactant>
    <interactant intactId="EBI-717919">
        <id>Q4V328</id>
        <label>GRIPAP1</label>
    </interactant>
    <organismsDiffer>false</organismsDiffer>
    <experiments>8</experiments>
</comment>
<comment type="interaction">
    <interactant intactId="EBI-529989">
        <id>Q9NRI5</id>
    </interactant>
    <interactant intactId="EBI-351506">
        <id>P06396</id>
        <label>GSN</label>
    </interactant>
    <organismsDiffer>false</organismsDiffer>
    <experiments>2</experiments>
</comment>
<comment type="interaction">
    <interactant intactId="EBI-529989">
        <id>Q9NRI5</id>
    </interactant>
    <interactant intactId="EBI-1058922">
        <id>O95714</id>
        <label>HERC2</label>
    </interactant>
    <organismsDiffer>false</organismsDiffer>
    <experiments>3</experiments>
</comment>
<comment type="interaction">
    <interactant intactId="EBI-529989">
        <id>Q9NRI5</id>
    </interactant>
    <interactant intactId="EBI-473801">
        <id>Q16891</id>
        <label>IMMT</label>
    </interactant>
    <organismsDiffer>false</organismsDiffer>
    <experiments>3</experiments>
</comment>
<comment type="interaction">
    <interactant intactId="EBI-529989">
        <id>Q9NRI5</id>
    </interactant>
    <interactant intactId="EBI-602041">
        <id>Q15811</id>
        <label>ITSN1</label>
    </interactant>
    <organismsDiffer>false</organismsDiffer>
    <experiments>4</experiments>
</comment>
<comment type="interaction">
    <interactant intactId="EBI-529989">
        <id>Q9NRI5</id>
    </interactant>
    <interactant intactId="EBI-1104844">
        <id>Q9Y496</id>
        <label>KIF3A</label>
    </interactant>
    <organismsDiffer>false</organismsDiffer>
    <experiments>5</experiments>
</comment>
<comment type="interaction">
    <interactant intactId="EBI-529989">
        <id>Q9NRI5</id>
    </interactant>
    <interactant intactId="EBI-1104854">
        <id>O14782</id>
        <label>KIF3C</label>
    </interactant>
    <organismsDiffer>false</organismsDiffer>
    <experiments>3</experiments>
</comment>
<comment type="interaction">
    <interactant intactId="EBI-529989">
        <id>Q9NRI5</id>
    </interactant>
    <interactant intactId="EBI-522925">
        <id>Q9UPN3</id>
        <label>MACF1</label>
    </interactant>
    <organismsDiffer>false</organismsDiffer>
    <experiments>4</experiments>
</comment>
<comment type="interaction">
    <interactant intactId="EBI-529989">
        <id>Q9NRI5</id>
    </interactant>
    <interactant intactId="EBI-929047">
        <id>P78559</id>
        <label>MAP1A</label>
    </interactant>
    <organismsDiffer>false</organismsDiffer>
    <experiments>3</experiments>
</comment>
<comment type="interaction">
    <interactant intactId="EBI-529989">
        <id>Q9NRI5</id>
    </interactant>
    <interactant intactId="EBI-2511133">
        <id>O95819</id>
        <label>MAP4K4</label>
    </interactant>
    <organismsDiffer>false</organismsDiffer>
    <experiments>2</experiments>
</comment>
<comment type="interaction">
    <interactant intactId="EBI-529989">
        <id>Q9NRI5</id>
    </interactant>
    <interactant intactId="EBI-352602">
        <id>P43243</id>
        <label>MATR3</label>
    </interactant>
    <organismsDiffer>false</organismsDiffer>
    <experiments>3</experiments>
</comment>
<comment type="interaction">
    <interactant intactId="EBI-529989">
        <id>Q9NRI5</id>
    </interactant>
    <interactant intactId="EBI-308358">
        <id>Q8NEY1</id>
        <label>NAV1</label>
    </interactant>
    <organismsDiffer>false</organismsDiffer>
    <experiments>3</experiments>
</comment>
<comment type="interaction">
    <interactant intactId="EBI-529989">
        <id>Q9NRI5</id>
    </interactant>
    <interactant intactId="EBI-941227">
        <id>Q9NXR1</id>
        <label>NDE1</label>
    </interactant>
    <organismsDiffer>false</organismsDiffer>
    <experiments>7</experiments>
</comment>
<comment type="interaction">
    <interactant intactId="EBI-529989">
        <id>Q9NRI5</id>
    </interactant>
    <interactant intactId="EBI-928842">
        <id>Q9GZM8</id>
        <label>NDEL1</label>
    </interactant>
    <organismsDiffer>false</organismsDiffer>
    <experiments>16</experiments>
</comment>
<comment type="interaction">
    <interactant intactId="EBI-529989">
        <id>Q9NRI5</id>
    </interactant>
    <interactant intactId="EBI-295715">
        <id>Q12769</id>
        <label>NUP160</label>
    </interactant>
    <organismsDiffer>false</organismsDiffer>
    <experiments>3</experiments>
</comment>
<comment type="interaction">
    <interactant intactId="EBI-529989">
        <id>Q9NRI5</id>
    </interactant>
    <interactant intactId="EBI-372826">
        <id>Q8TEM1</id>
        <label>NUP210</label>
    </interactant>
    <organismsDiffer>false</organismsDiffer>
    <experiments>2</experiments>
</comment>
<comment type="interaction">
    <interactant intactId="EBI-529989">
        <id>Q9NRI5</id>
    </interactant>
    <interactant intactId="EBI-720620">
        <id>P43034</id>
        <label>PAFAH1B1</label>
    </interactant>
    <organismsDiffer>false</organismsDiffer>
    <experiments>2</experiments>
</comment>
<comment type="interaction">
    <interactant intactId="EBI-529989">
        <id>Q9NRI5</id>
    </interactant>
    <interactant intactId="EBI-530012">
        <id>O95613</id>
        <label>PCNT</label>
    </interactant>
    <organismsDiffer>false</organismsDiffer>
    <experiments>5</experiments>
</comment>
<comment type="interaction">
    <interactant intactId="EBI-529989">
        <id>Q9NRI5</id>
    </interactant>
    <interactant intactId="EBI-1105124">
        <id>Q5VU43</id>
        <label>PDE4DIP</label>
    </interactant>
    <organismsDiffer>false</organismsDiffer>
    <experiments>3</experiments>
</comment>
<comment type="interaction">
    <interactant intactId="EBI-529989">
        <id>Q9NRI5</id>
    </interactant>
    <interactant intactId="EBI-636085">
        <id>Q96S59</id>
        <label>RANBP9</label>
    </interactant>
    <organismsDiffer>false</organismsDiffer>
    <experiments>7</experiments>
</comment>
<comment type="interaction">
    <interactant intactId="EBI-529989">
        <id>Q9NRI5</id>
    </interactant>
    <interactant intactId="EBI-2511609">
        <id>Q99666</id>
        <label>RGPD6</label>
    </interactant>
    <organismsDiffer>false</organismsDiffer>
    <experiments>3</experiments>
</comment>
<comment type="interaction">
    <interactant intactId="EBI-529989">
        <id>Q9NRI5</id>
    </interactant>
    <interactant intactId="EBI-744408">
        <id>O75150</id>
        <label>RNF40</label>
    </interactant>
    <organismsDiffer>false</organismsDiffer>
    <experiments>3</experiments>
</comment>
<comment type="interaction">
    <interactant intactId="EBI-529989">
        <id>Q9NRI5</id>
    </interactant>
    <interactant intactId="EBI-413317">
        <id>Q96R06</id>
        <label>SPAG5</label>
    </interactant>
    <organismsDiffer>false</organismsDiffer>
    <experiments>3</experiments>
</comment>
<comment type="interaction">
    <interactant intactId="EBI-529989">
        <id>Q9NRI5</id>
    </interactant>
    <interactant intactId="EBI-351450">
        <id>Q13813</id>
        <label>SPTAN1</label>
    </interactant>
    <organismsDiffer>false</organismsDiffer>
    <experiments>3</experiments>
</comment>
<comment type="interaction">
    <interactant intactId="EBI-529989">
        <id>Q9NRI5</id>
    </interactant>
    <interactant intactId="EBI-351561">
        <id>Q01082</id>
        <label>SPTBN1</label>
    </interactant>
    <organismsDiffer>false</organismsDiffer>
    <experiments>4</experiments>
</comment>
<comment type="interaction">
    <interactant intactId="EBI-529989">
        <id>Q9NRI5</id>
    </interactant>
    <interactant intactId="EBI-308543">
        <id>Q9H254</id>
        <label>SPTBN4</label>
    </interactant>
    <organismsDiffer>false</organismsDiffer>
    <experiments>3</experiments>
</comment>
<comment type="interaction">
    <interactant intactId="EBI-529989">
        <id>Q9NRI5</id>
    </interactant>
    <interactant intactId="EBI-928867">
        <id>Q8NF91</id>
        <label>SYNE1</label>
    </interactant>
    <organismsDiffer>false</organismsDiffer>
    <experiments>7</experiments>
</comment>
<comment type="interaction">
    <interactant intactId="EBI-529989">
        <id>Q9NRI5</id>
    </interactant>
    <interactant intactId="EBI-1105213">
        <id>Q9UBB9</id>
        <label>TFIP11</label>
    </interactant>
    <organismsDiffer>false</organismsDiffer>
    <experiments>3</experiments>
</comment>
<comment type="interaction">
    <interactant intactId="EBI-529989">
        <id>Q9NRI5</id>
    </interactant>
    <interactant intactId="EBI-1051794">
        <id>Q9UKE5</id>
        <label>TNIK</label>
    </interactant>
    <organismsDiffer>false</organismsDiffer>
    <experiments>4</experiments>
</comment>
<comment type="interaction">
    <interactant intactId="EBI-529989">
        <id>Q9NRI5</id>
    </interactant>
    <interactant intactId="EBI-1105254">
        <id>O95271</id>
        <label>TNKS</label>
    </interactant>
    <organismsDiffer>false</organismsDiffer>
    <experiments>5</experiments>
</comment>
<comment type="interaction">
    <interactant intactId="EBI-529989">
        <id>Q9NRI5</id>
    </interactant>
    <interactant intactId="EBI-4398527">
        <id>Q9H2K2</id>
        <label>TNKS2</label>
    </interactant>
    <organismsDiffer>false</organismsDiffer>
    <experiments>3</experiments>
</comment>
<comment type="interaction">
    <interactant intactId="EBI-529989">
        <id>Q9NRI5</id>
    </interactant>
    <interactant intactId="EBI-928811">
        <id>Q8TDR0</id>
        <label>TRAF3IP1</label>
    </interactant>
    <organismsDiffer>false</organismsDiffer>
    <experiments>9</experiments>
</comment>
<comment type="interaction">
    <interactant intactId="EBI-529989">
        <id>Q9NRI5</id>
    </interactant>
    <interactant intactId="EBI-719493">
        <id>P14373</id>
        <label>TRIM27</label>
    </interactant>
    <organismsDiffer>false</organismsDiffer>
    <experiments>3</experiments>
</comment>
<comment type="interaction">
    <interactant intactId="EBI-529989">
        <id>Q9NRI5</id>
    </interactant>
    <interactant intactId="EBI-741602">
        <id>O94972</id>
        <label>TRIM37</label>
    </interactant>
    <organismsDiffer>false</organismsDiffer>
    <experiments>3</experiments>
</comment>
<comment type="interaction">
    <interactant intactId="EBI-529989">
        <id>Q9NRI5</id>
    </interactant>
    <interactant intactId="EBI-718519">
        <id>O75962</id>
        <label>TRIO</label>
    </interactant>
    <organismsDiffer>false</organismsDiffer>
    <experiments>3</experiments>
</comment>
<comment type="interaction">
    <interactant intactId="EBI-529989">
        <id>Q9NRI5</id>
    </interactant>
    <interactant intactId="EBI-372110">
        <id>Q9H0D6</id>
        <label>XRN2</label>
    </interactant>
    <organismsDiffer>false</organismsDiffer>
    <experiments>3</experiments>
</comment>
<comment type="interaction">
    <interactant intactId="EBI-529989">
        <id>Q9NRI5</id>
    </interactant>
    <interactant intactId="EBI-356498">
        <id>P62258</id>
        <label>YWHAE</label>
    </interactant>
    <organismsDiffer>false</organismsDiffer>
    <experiments>3</experiments>
</comment>
<comment type="interaction">
    <interactant intactId="EBI-529989">
        <id>Q9NRI5</id>
    </interactant>
    <interactant intactId="EBI-347088">
        <id>P63104</id>
        <label>YWHAZ</label>
    </interactant>
    <organismsDiffer>false</organismsDiffer>
    <experiments>3</experiments>
</comment>
<comment type="interaction">
    <interactant intactId="EBI-529989">
        <id>Q9NRI5</id>
    </interactant>
    <interactant intactId="EBI-2554140">
        <id>Q6A065</id>
        <label>Cep170</label>
    </interactant>
    <organismsDiffer>true</organismsDiffer>
    <experiments>2</experiments>
</comment>
<comment type="interaction">
    <interactant intactId="EBI-529989">
        <id>Q9NRI5</id>
    </interactant>
    <interactant intactId="EBI-7585099">
        <id>Q8VD04</id>
        <label>Gripap1</label>
    </interactant>
    <organismsDiffer>true</organismsDiffer>
    <experiments>2</experiments>
</comment>
<comment type="interaction">
    <interactant intactId="EBI-529989">
        <id>Q9NRI5</id>
    </interactant>
    <interactant intactId="EBI-2552918">
        <id>Q9Z1B5</id>
        <label>Mad2l1</label>
    </interactant>
    <organismsDiffer>true</organismsDiffer>
    <experiments>2</experiments>
</comment>
<comment type="interaction">
    <interactant intactId="EBI-529989">
        <id>Q9NRI5</id>
    </interactant>
    <interactant intactId="EBI-309934">
        <id>Q9CZA6</id>
        <label>Nde1</label>
    </interactant>
    <organismsDiffer>true</organismsDiffer>
    <experiments>2</experiments>
</comment>
<comment type="interaction">
    <interactant intactId="EBI-529989">
        <id>Q9NRI5</id>
    </interactant>
    <interactant intactId="EBI-646668">
        <id>Q9ERR1</id>
        <label>Ndel1</label>
    </interactant>
    <organismsDiffer>true</organismsDiffer>
    <experiments>2</experiments>
</comment>
<comment type="interaction">
    <interactant intactId="EBI-15881455">
        <id>Q9NRI5-1</id>
    </interactant>
    <interactant intactId="EBI-709735">
        <id>O15372</id>
        <label>EIF3H</label>
    </interactant>
    <organismsDiffer>false</organismsDiffer>
    <experiments>3</experiments>
</comment>
<comment type="interaction">
    <interactant intactId="EBI-15881455">
        <id>Q9NRI5-1</id>
    </interactant>
    <interactant intactId="EBI-11614103">
        <id>Q16891-1</id>
        <label>IMMT</label>
    </interactant>
    <organismsDiffer>false</organismsDiffer>
    <experiments>9</experiments>
</comment>
<comment type="interaction">
    <interactant intactId="EBI-15881455">
        <id>Q9NRI5-1</id>
    </interactant>
    <interactant intactId="EBI-522925">
        <id>Q9UPN3</id>
        <label>MACF1</label>
    </interactant>
    <organismsDiffer>false</organismsDiffer>
    <experiments>3</experiments>
</comment>
<comment type="interaction">
    <interactant intactId="EBI-15881455">
        <id>Q9NRI5-1</id>
    </interactant>
    <interactant intactId="EBI-928842">
        <id>Q9GZM8</id>
        <label>NDEL1</label>
    </interactant>
    <organismsDiffer>false</organismsDiffer>
    <experiments>4</experiments>
</comment>
<comment type="interaction">
    <interactant intactId="EBI-15881455">
        <id>Q9NRI5-1</id>
    </interactant>
    <interactant intactId="EBI-1105073">
        <id>Q99784</id>
        <label>OLFM1</label>
    </interactant>
    <organismsDiffer>false</organismsDiffer>
    <experiments>3</experiments>
</comment>
<comment type="interaction">
    <interactant intactId="EBI-11988027">
        <id>Q9NRI5-2</id>
    </interactant>
    <interactant intactId="EBI-11096309">
        <id>Q9NYB9-2</id>
        <label>ABI2</label>
    </interactant>
    <organismsDiffer>false</organismsDiffer>
    <experiments>3</experiments>
</comment>
<comment type="interaction">
    <interactant intactId="EBI-11988027">
        <id>Q9NRI5-2</id>
    </interactant>
    <interactant intactId="EBI-11102284">
        <id>Q96SZ5</id>
        <label>ADO</label>
    </interactant>
    <organismsDiffer>false</organismsDiffer>
    <experiments>3</experiments>
</comment>
<comment type="interaction">
    <interactant intactId="EBI-11988027">
        <id>Q9NRI5-2</id>
    </interactant>
    <interactant intactId="EBI-745226">
        <id>Q13155</id>
        <label>AIMP2</label>
    </interactant>
    <organismsDiffer>false</organismsDiffer>
    <experiments>3</experiments>
</comment>
<comment type="interaction">
    <interactant intactId="EBI-11988027">
        <id>Q9NRI5-2</id>
    </interactant>
    <interactant intactId="EBI-8643161">
        <id>Q9NX04</id>
        <label>AIRIM</label>
    </interactant>
    <organismsDiffer>false</organismsDiffer>
    <experiments>3</experiments>
</comment>
<comment type="interaction">
    <interactant intactId="EBI-11988027">
        <id>Q9NRI5-2</id>
    </interactant>
    <interactant intactId="EBI-17286414">
        <id>A2BDD9</id>
        <label>AMOT</label>
    </interactant>
    <organismsDiffer>false</organismsDiffer>
    <experiments>3</experiments>
</comment>
<comment type="interaction">
    <interactant intactId="EBI-11988027">
        <id>Q9NRI5-2</id>
    </interactant>
    <interactant intactId="EBI-541426">
        <id>Q9BXS5</id>
        <label>AP1M1</label>
    </interactant>
    <organismsDiffer>false</organismsDiffer>
    <experiments>3</experiments>
</comment>
<comment type="interaction">
    <interactant intactId="EBI-11988027">
        <id>Q9NRI5-2</id>
    </interactant>
    <interactant intactId="EBI-742909">
        <id>Q9H6L4</id>
        <label>ARMC7</label>
    </interactant>
    <organismsDiffer>false</organismsDiffer>
    <experiments>3</experiments>
</comment>
<comment type="interaction">
    <interactant intactId="EBI-11988027">
        <id>Q9NRI5-2</id>
    </interactant>
    <interactant intactId="EBI-355275">
        <id>O95816</id>
        <label>BAG2</label>
    </interactant>
    <organismsDiffer>false</organismsDiffer>
    <experiments>3</experiments>
</comment>
<comment type="interaction">
    <interactant intactId="EBI-11988027">
        <id>Q9NRI5-2</id>
    </interactant>
    <interactant intactId="EBI-10229433">
        <id>Q13515</id>
        <label>BFSP2</label>
    </interactant>
    <organismsDiffer>false</organismsDiffer>
    <experiments>3</experiments>
</comment>
<comment type="interaction">
    <interactant intactId="EBI-11988027">
        <id>Q9NRI5-2</id>
    </interactant>
    <interactant intactId="EBI-10193358">
        <id>Q96GS4</id>
        <label>BORCS6</label>
    </interactant>
    <organismsDiffer>false</organismsDiffer>
    <experiments>4</experiments>
</comment>
<comment type="interaction">
    <interactant intactId="EBI-11988027">
        <id>Q9NRI5-2</id>
    </interactant>
    <interactant intactId="EBI-714754">
        <id>O95696</id>
        <label>BRD1</label>
    </interactant>
    <organismsDiffer>false</organismsDiffer>
    <experiments>3</experiments>
</comment>
<comment type="interaction">
    <interactant intactId="EBI-11988027">
        <id>Q9NRI5-2</id>
    </interactant>
    <interactant intactId="EBI-739879">
        <id>Q53TS8</id>
        <label>C2CD6</label>
    </interactant>
    <organismsDiffer>false</organismsDiffer>
    <experiments>3</experiments>
</comment>
<comment type="interaction">
    <interactant intactId="EBI-11988027">
        <id>Q9NRI5-2</id>
    </interactant>
    <interactant intactId="EBI-715389">
        <id>Q9H7E9</id>
        <label>C8orf33</label>
    </interactant>
    <organismsDiffer>false</organismsDiffer>
    <experiments>3</experiments>
</comment>
<comment type="interaction">
    <interactant intactId="EBI-11988027">
        <id>Q9NRI5-2</id>
    </interactant>
    <interactant intactId="EBI-11530605">
        <id>Q9H257-2</id>
        <label>CARD9</label>
    </interactant>
    <organismsDiffer>false</organismsDiffer>
    <experiments>3</experiments>
</comment>
<comment type="interaction">
    <interactant intactId="EBI-11988027">
        <id>Q9NRI5-2</id>
    </interactant>
    <interactant intactId="EBI-10171570">
        <id>Q68D86</id>
        <label>CCDC102B</label>
    </interactant>
    <organismsDiffer>false</organismsDiffer>
    <experiments>3</experiments>
</comment>
<comment type="interaction">
    <interactant intactId="EBI-11988027">
        <id>Q9NRI5-2</id>
    </interactant>
    <interactant intactId="EBI-10961312">
        <id>Q8IYE1</id>
        <label>CCDC13</label>
    </interactant>
    <organismsDiffer>false</organismsDiffer>
    <experiments>3</experiments>
</comment>
<comment type="interaction">
    <interactant intactId="EBI-11988027">
        <id>Q9NRI5-2</id>
    </interactant>
    <interactant intactId="EBI-750686">
        <id>Q8NCU1</id>
        <label>CCDC197</label>
    </interactant>
    <organismsDiffer>false</organismsDiffer>
    <experiments>3</experiments>
</comment>
<comment type="interaction">
    <interactant intactId="EBI-11988027">
        <id>Q9NRI5-2</id>
    </interactant>
    <interactant intactId="EBI-10961624">
        <id>Q2TAC2-2</id>
        <label>CCDC57</label>
    </interactant>
    <organismsDiffer>false</organismsDiffer>
    <experiments>3</experiments>
</comment>
<comment type="interaction">
    <interactant intactId="EBI-11988027">
        <id>Q9NRI5-2</id>
    </interactant>
    <interactant intactId="EBI-719994">
        <id>Q53HC0</id>
        <label>CCDC92</label>
    </interactant>
    <organismsDiffer>false</organismsDiffer>
    <experiments>3</experiments>
</comment>
<comment type="interaction">
    <interactant intactId="EBI-11988027">
        <id>Q9NRI5-2</id>
    </interactant>
    <interactant intactId="EBI-10175300">
        <id>Q8TD31-3</id>
        <label>CCHCR1</label>
    </interactant>
    <organismsDiffer>false</organismsDiffer>
    <experiments>3</experiments>
</comment>
<comment type="interaction">
    <interactant intactId="EBI-11988027">
        <id>Q9NRI5-2</id>
    </interactant>
    <interactant intactId="EBI-396137">
        <id>Q9UJX2</id>
        <label>CDC23</label>
    </interactant>
    <organismsDiffer>false</organismsDiffer>
    <experiments>3</experiments>
</comment>
<comment type="interaction">
    <interactant intactId="EBI-11988027">
        <id>Q9NRI5-2</id>
    </interactant>
    <interactant intactId="EBI-295634">
        <id>Q16543</id>
        <label>CDC37</label>
    </interactant>
    <organismsDiffer>false</organismsDiffer>
    <experiments>3</experiments>
</comment>
<comment type="interaction">
    <interactant intactId="EBI-11988027">
        <id>Q9NRI5-2</id>
    </interactant>
    <interactant intactId="EBI-3919850">
        <id>Q8IVW4</id>
        <label>CDKL3</label>
    </interactant>
    <organismsDiffer>false</organismsDiffer>
    <experiments>3</experiments>
</comment>
<comment type="interaction">
    <interactant intactId="EBI-11988027">
        <id>Q9NRI5-2</id>
    </interactant>
    <interactant intactId="EBI-11752486">
        <id>Q86XR8-3</id>
        <label>CEP57</label>
    </interactant>
    <organismsDiffer>false</organismsDiffer>
    <experiments>3</experiments>
</comment>
<comment type="interaction">
    <interactant intactId="EBI-11988027">
        <id>Q9NRI5-2</id>
    </interactant>
    <interactant intactId="EBI-749051">
        <id>Q8IYR0</id>
        <label>CFAP206</label>
    </interactant>
    <organismsDiffer>false</organismsDiffer>
    <experiments>3</experiments>
</comment>
<comment type="interaction">
    <interactant intactId="EBI-11988027">
        <id>Q9NRI5-2</id>
    </interactant>
    <interactant intactId="EBI-11962928">
        <id>Q9UI47-2</id>
        <label>CTNNA3</label>
    </interactant>
    <organismsDiffer>false</organismsDiffer>
    <experiments>3</experiments>
</comment>
<comment type="interaction">
    <interactant intactId="EBI-11988027">
        <id>Q9NRI5-2</id>
    </interactant>
    <interactant intactId="EBI-5453285">
        <id>Q2TBE0</id>
        <label>CWF19L2</label>
    </interactant>
    <organismsDiffer>false</organismsDiffer>
    <experiments>3</experiments>
</comment>
<comment type="interaction">
    <interactant intactId="EBI-11988027">
        <id>Q9NRI5-2</id>
    </interactant>
    <interactant intactId="EBI-351257">
        <id>P26196</id>
        <label>DDX6</label>
    </interactant>
    <organismsDiffer>false</organismsDiffer>
    <experiments>3</experiments>
</comment>
<comment type="interaction">
    <interactant intactId="EBI-11988027">
        <id>Q9NRI5-2</id>
    </interactant>
    <interactant intactId="EBI-299104">
        <id>P38919</id>
        <label>EIF4A3</label>
    </interactant>
    <organismsDiffer>false</organismsDiffer>
    <experiments>3</experiments>
</comment>
<comment type="interaction">
    <interactant intactId="EBI-11988027">
        <id>Q9NRI5-2</id>
    </interactant>
    <interactant intactId="EBI-11989522">
        <id>Q7Z589-5</id>
        <label>EMSY</label>
    </interactant>
    <organismsDiffer>false</organismsDiffer>
    <experiments>3</experiments>
</comment>
<comment type="interaction">
    <interactant intactId="EBI-11988027">
        <id>Q9NRI5-2</id>
    </interactant>
    <interactant intactId="EBI-719816">
        <id>Q9NWN3</id>
        <label>FBXO34</label>
    </interactant>
    <organismsDiffer>false</organismsDiffer>
    <experiments>3</experiments>
</comment>
<comment type="interaction">
    <interactant intactId="EBI-11988027">
        <id>Q9NRI5-2</id>
    </interactant>
    <interactant intactId="EBI-11533409">
        <id>Q96Q35-2</id>
        <label>FLACC1</label>
    </interactant>
    <organismsDiffer>false</organismsDiffer>
    <experiments>3</experiments>
</comment>
<comment type="interaction">
    <interactant intactId="EBI-11988027">
        <id>Q9NRI5-2</id>
    </interactant>
    <interactant intactId="EBI-746969">
        <id>Q9H0R8</id>
        <label>GABARAPL1</label>
    </interactant>
    <organismsDiffer>false</organismsDiffer>
    <experiments>3</experiments>
</comment>
<comment type="interaction">
    <interactant intactId="EBI-11988027">
        <id>Q9NRI5-2</id>
    </interactant>
    <interactant intactId="EBI-7960826">
        <id>Q8NHY3</id>
        <label>GAS2L2</label>
    </interactant>
    <organismsDiffer>false</organismsDiffer>
    <experiments>3</experiments>
</comment>
<comment type="interaction">
    <interactant intactId="EBI-11988027">
        <id>Q9NRI5-2</id>
    </interactant>
    <interactant intactId="EBI-1052570">
        <id>O95995</id>
        <label>GAS8</label>
    </interactant>
    <organismsDiffer>false</organismsDiffer>
    <experiments>3</experiments>
</comment>
<comment type="interaction">
    <interactant intactId="EBI-11988027">
        <id>Q9NRI5-2</id>
    </interactant>
    <interactant intactId="EBI-746252">
        <id>Q96CN9</id>
        <label>GCC1</label>
    </interactant>
    <organismsDiffer>false</organismsDiffer>
    <experiments>3</experiments>
</comment>
<comment type="interaction">
    <interactant intactId="EBI-11988027">
        <id>Q9NRI5-2</id>
    </interactant>
    <interactant intactId="EBI-744104">
        <id>P55040</id>
        <label>GEM</label>
    </interactant>
    <organismsDiffer>false</organismsDiffer>
    <experiments>3</experiments>
</comment>
<comment type="interaction">
    <interactant intactId="EBI-11988027">
        <id>Q9NRI5-2</id>
    </interactant>
    <interactant intactId="EBI-11427343">
        <id>Q9P2W3</id>
        <label>GNG13</label>
    </interactant>
    <organismsDiffer>false</organismsDiffer>
    <experiments>3</experiments>
</comment>
<comment type="interaction">
    <interactant intactId="EBI-11988027">
        <id>Q9NRI5-2</id>
    </interactant>
    <interactant intactId="EBI-751540">
        <id>O95872</id>
        <label>GPANK1</label>
    </interactant>
    <organismsDiffer>false</organismsDiffer>
    <experiments>3</experiments>
</comment>
<comment type="interaction">
    <interactant intactId="EBI-11988027">
        <id>Q9NRI5-2</id>
    </interactant>
    <interactant intactId="EBI-717919">
        <id>Q4V328</id>
        <label>GRIPAP1</label>
    </interactant>
    <organismsDiffer>false</organismsDiffer>
    <experiments>3</experiments>
</comment>
<comment type="interaction">
    <interactant intactId="EBI-11988027">
        <id>Q9NRI5-2</id>
    </interactant>
    <interactant intactId="EBI-357966">
        <id>P07910</id>
        <label>HNRNPC</label>
    </interactant>
    <organismsDiffer>false</organismsDiffer>
    <experiments>3</experiments>
</comment>
<comment type="interaction">
    <interactant intactId="EBI-11988027">
        <id>Q9NRI5-2</id>
    </interactant>
    <interactant intactId="EBI-9091197">
        <id>Q8IY31-3</id>
        <label>IFT20</label>
    </interactant>
    <organismsDiffer>false</organismsDiffer>
    <experiments>3</experiments>
</comment>
<comment type="interaction">
    <interactant intactId="EBI-11988027">
        <id>Q9NRI5-2</id>
    </interactant>
    <interactant intactId="EBI-12066130">
        <id>Q96LB3-2</id>
        <label>IFT74</label>
    </interactant>
    <organismsDiffer>false</organismsDiffer>
    <experiments>3</experiments>
</comment>
<comment type="interaction">
    <interactant intactId="EBI-11988027">
        <id>Q9NRI5-2</id>
    </interactant>
    <interactant intactId="EBI-8472129">
        <id>Q9HAQ2</id>
        <label>KIF9</label>
    </interactant>
    <organismsDiffer>false</organismsDiffer>
    <experiments>3</experiments>
</comment>
<comment type="interaction">
    <interactant intactId="EBI-11988027">
        <id>Q9NRI5-2</id>
    </interactant>
    <interactant intactId="EBI-14069005">
        <id>Q9BVG8-5</id>
        <label>KIFC3</label>
    </interactant>
    <organismsDiffer>false</organismsDiffer>
    <experiments>3</experiments>
</comment>
<comment type="interaction">
    <interactant intactId="EBI-11988027">
        <id>Q9NRI5-2</id>
    </interactant>
    <interactant intactId="EBI-726510">
        <id>Q96BZ8</id>
        <label>LENG1</label>
    </interactant>
    <organismsDiffer>false</organismsDiffer>
    <experiments>3</experiments>
</comment>
<comment type="interaction">
    <interactant intactId="EBI-11988027">
        <id>Q9NRI5-2</id>
    </interactant>
    <interactant intactId="EBI-743811">
        <id>Q8NEH6</id>
        <label>MNS1</label>
    </interactant>
    <organismsDiffer>false</organismsDiffer>
    <experiments>3</experiments>
</comment>
<comment type="interaction">
    <interactant intactId="EBI-11988027">
        <id>Q9NRI5-2</id>
    </interactant>
    <interactant intactId="EBI-399257">
        <id>Q15014</id>
        <label>MORF4L2</label>
    </interactant>
    <organismsDiffer>false</organismsDiffer>
    <experiments>3</experiments>
</comment>
<comment type="interaction">
    <interactant intactId="EBI-11988027">
        <id>Q9NRI5-2</id>
    </interactant>
    <interactant intactId="EBI-713635">
        <id>O43639</id>
        <label>NCK2</label>
    </interactant>
    <organismsDiffer>false</organismsDiffer>
    <experiments>3</experiments>
</comment>
<comment type="interaction">
    <interactant intactId="EBI-11988027">
        <id>Q9NRI5-2</id>
    </interactant>
    <interactant intactId="EBI-928842">
        <id>Q9GZM8</id>
        <label>NDEL1</label>
    </interactant>
    <organismsDiffer>false</organismsDiffer>
    <experiments>3</experiments>
</comment>
<comment type="interaction">
    <interactant intactId="EBI-11988027">
        <id>Q9NRI5-2</id>
    </interactant>
    <interactant intactId="EBI-11956853">
        <id>Q8N987</id>
        <label>NECAB1</label>
    </interactant>
    <organismsDiffer>false</organismsDiffer>
    <experiments>3</experiments>
</comment>
<comment type="interaction">
    <interactant intactId="EBI-11988027">
        <id>Q9NRI5-2</id>
    </interactant>
    <interactant intactId="EBI-744782">
        <id>Q9Y5B8</id>
        <label>NME7</label>
    </interactant>
    <organismsDiffer>false</organismsDiffer>
    <experiments>3</experiments>
</comment>
<comment type="interaction">
    <interactant intactId="EBI-11988027">
        <id>Q9NRI5-2</id>
    </interactant>
    <interactant intactId="EBI-530034">
        <id>O43189</id>
        <label>PHF1</label>
    </interactant>
    <organismsDiffer>false</organismsDiffer>
    <experiments>3</experiments>
</comment>
<comment type="interaction">
    <interactant intactId="EBI-11988027">
        <id>Q9NRI5-2</id>
    </interactant>
    <interactant intactId="EBI-14066006">
        <id>Q4G0R1</id>
        <label>PIBF1</label>
    </interactant>
    <organismsDiffer>false</organismsDiffer>
    <experiments>3</experiments>
</comment>
<comment type="interaction">
    <interactant intactId="EBI-11988027">
        <id>Q9NRI5-2</id>
    </interactant>
    <interactant intactId="EBI-79893">
        <id>Q92569</id>
        <label>PIK3R3</label>
    </interactant>
    <organismsDiffer>false</organismsDiffer>
    <experiments>3</experiments>
</comment>
<comment type="interaction">
    <interactant intactId="EBI-11988027">
        <id>Q9NRI5-2</id>
    </interactant>
    <interactant intactId="EBI-602382">
        <id>Q16512</id>
        <label>PKN1</label>
    </interactant>
    <organismsDiffer>false</organismsDiffer>
    <experiments>3</experiments>
</comment>
<comment type="interaction">
    <interactant intactId="EBI-11988027">
        <id>Q9NRI5-2</id>
    </interactant>
    <interactant intactId="EBI-5452779">
        <id>Q9BUI4</id>
        <label>POLR3C</label>
    </interactant>
    <organismsDiffer>false</organismsDiffer>
    <experiments>3</experiments>
</comment>
<comment type="interaction">
    <interactant intactId="EBI-11988027">
        <id>Q9NRI5-2</id>
    </interactant>
    <interactant intactId="EBI-1763225">
        <id>O75145</id>
        <label>PPFIA3</label>
    </interactant>
    <organismsDiffer>false</organismsDiffer>
    <experiments>3</experiments>
</comment>
<comment type="interaction">
    <interactant intactId="EBI-11988027">
        <id>Q9NRI5-2</id>
    </interactant>
    <interactant intactId="EBI-12135327">
        <id>Q8WXF1-2</id>
        <label>PSPC1</label>
    </interactant>
    <organismsDiffer>false</organismsDiffer>
    <experiments>3</experiments>
</comment>
<comment type="interaction">
    <interactant intactId="EBI-11988027">
        <id>Q9NRI5-2</id>
    </interactant>
    <interactant intactId="EBI-347462">
        <id>P47897</id>
        <label>QARS1</label>
    </interactant>
    <organismsDiffer>false</organismsDiffer>
    <experiments>3</experiments>
</comment>
<comment type="interaction">
    <interactant intactId="EBI-11988027">
        <id>Q9NRI5-2</id>
    </interactant>
    <interactant intactId="EBI-740773">
        <id>Q96IZ5</id>
        <label>RBM41</label>
    </interactant>
    <organismsDiffer>false</organismsDiffer>
    <experiments>3</experiments>
</comment>
<comment type="interaction">
    <interactant intactId="EBI-11988027">
        <id>Q9NRI5-2</id>
    </interactant>
    <interactant intactId="EBI-10253121">
        <id>Q6P9E2</id>
        <label>RECK</label>
    </interactant>
    <organismsDiffer>false</organismsDiffer>
    <experiments>3</experiments>
</comment>
<comment type="interaction">
    <interactant intactId="EBI-11988027">
        <id>Q9NRI5-2</id>
    </interactant>
    <interactant intactId="EBI-744408">
        <id>O75150</id>
        <label>RNF40</label>
    </interactant>
    <organismsDiffer>false</organismsDiffer>
    <experiments>3</experiments>
</comment>
<comment type="interaction">
    <interactant intactId="EBI-11988027">
        <id>Q9NRI5-2</id>
    </interactant>
    <interactant intactId="EBI-358489">
        <id>Q96GM5</id>
        <label>SMARCD1</label>
    </interactant>
    <organismsDiffer>false</organismsDiffer>
    <experiments>3</experiments>
</comment>
<comment type="interaction">
    <interactant intactId="EBI-11988027">
        <id>Q9NRI5-2</id>
    </interactant>
    <interactant intactId="EBI-455078">
        <id>Q969G3</id>
        <label>SMARCE1</label>
    </interactant>
    <organismsDiffer>false</organismsDiffer>
    <experiments>3</experiments>
</comment>
<comment type="interaction">
    <interactant intactId="EBI-11988027">
        <id>Q9NRI5-2</id>
    </interactant>
    <interactant intactId="EBI-605405">
        <id>Q8IY18</id>
        <label>SMC5</label>
    </interactant>
    <organismsDiffer>false</organismsDiffer>
    <experiments>3</experiments>
</comment>
<comment type="interaction">
    <interactant intactId="EBI-11988027">
        <id>Q9NRI5-2</id>
    </interactant>
    <interactant intactId="EBI-8463848">
        <id>Q8NB12</id>
        <label>SMYD1</label>
    </interactant>
    <organismsDiffer>false</organismsDiffer>
    <experiments>3</experiments>
</comment>
<comment type="interaction">
    <interactant intactId="EBI-11988027">
        <id>Q9NRI5-2</id>
    </interactant>
    <interactant intactId="EBI-11995806">
        <id>Q9H0A9-2</id>
        <label>SPATC1L</label>
    </interactant>
    <organismsDiffer>false</organismsDiffer>
    <experiments>3</experiments>
</comment>
<comment type="interaction">
    <interactant intactId="EBI-11988027">
        <id>Q9NRI5-2</id>
    </interactant>
    <interactant intactId="EBI-714135">
        <id>O75558</id>
        <label>STX11</label>
    </interactant>
    <organismsDiffer>false</organismsDiffer>
    <experiments>4</experiments>
</comment>
<comment type="interaction">
    <interactant intactId="EBI-11988027">
        <id>Q9NRI5-2</id>
    </interactant>
    <interactant intactId="EBI-740595">
        <id>Q9UMX1</id>
        <label>SUFU</label>
    </interactant>
    <organismsDiffer>false</organismsDiffer>
    <experiments>3</experiments>
</comment>
<comment type="interaction">
    <interactant intactId="EBI-11988027">
        <id>Q9NRI5-2</id>
    </interactant>
    <interactant intactId="EBI-11974855">
        <id>Q9Y4C2-2</id>
        <label>TCAF1</label>
    </interactant>
    <organismsDiffer>false</organismsDiffer>
    <experiments>3</experiments>
</comment>
<comment type="interaction">
    <interactant intactId="EBI-11988027">
        <id>Q9NRI5-2</id>
    </interactant>
    <interactant intactId="EBI-11955057">
        <id>Q8N8B7-2</id>
        <label>TCEANC</label>
    </interactant>
    <organismsDiffer>false</organismsDiffer>
    <experiments>3</experiments>
</comment>
<comment type="interaction">
    <interactant intactId="EBI-11988027">
        <id>Q9NRI5-2</id>
    </interactant>
    <interactant intactId="EBI-3650647">
        <id>Q9BUZ4</id>
        <label>TRAF4</label>
    </interactant>
    <organismsDiffer>false</organismsDiffer>
    <experiments>3</experiments>
</comment>
<comment type="interaction">
    <interactant intactId="EBI-11988027">
        <id>Q9NRI5-2</id>
    </interactant>
    <interactant intactId="EBI-702370">
        <id>Q14134</id>
        <label>TRIM29</label>
    </interactant>
    <organismsDiffer>false</organismsDiffer>
    <experiments>3</experiments>
</comment>
<comment type="interaction">
    <interactant intactId="EBI-11988027">
        <id>Q9NRI5-2</id>
    </interactant>
    <interactant intactId="EBI-2130449">
        <id>Q6AZZ1</id>
        <label>TRIM68</label>
    </interactant>
    <organismsDiffer>false</organismsDiffer>
    <experiments>3</experiments>
</comment>
<comment type="interaction">
    <interactant intactId="EBI-11988027">
        <id>Q9NRI5-2</id>
    </interactant>
    <interactant intactId="EBI-744794">
        <id>Q9BZW7</id>
        <label>TSGA10</label>
    </interactant>
    <organismsDiffer>false</organismsDiffer>
    <experiments>3</experiments>
</comment>
<comment type="interaction">
    <interactant intactId="EBI-11988027">
        <id>Q9NRI5-2</id>
    </interactant>
    <interactant intactId="EBI-746981">
        <id>Q969E8</id>
        <label>TSR2</label>
    </interactant>
    <organismsDiffer>false</organismsDiffer>
    <experiments>3</experiments>
</comment>
<comment type="interaction">
    <interactant intactId="EBI-11988027">
        <id>Q9NRI5-2</id>
    </interactant>
    <interactant intactId="EBI-9090990">
        <id>Q5W5X9-3</id>
        <label>TTC23</label>
    </interactant>
    <organismsDiffer>false</organismsDiffer>
    <experiments>3</experiments>
</comment>
<comment type="interaction">
    <interactant intactId="EBI-11988027">
        <id>Q9NRI5-2</id>
    </interactant>
    <interactant intactId="EBI-7353612">
        <id>P57075-2</id>
        <label>UBASH3A</label>
    </interactant>
    <organismsDiffer>false</organismsDiffer>
    <experiments>3</experiments>
</comment>
<comment type="interaction">
    <interactant intactId="EBI-11988027">
        <id>Q9NRI5-2</id>
    </interactant>
    <interactant intactId="EBI-1380492">
        <id>Q8TF42</id>
        <label>UBASH3B</label>
    </interactant>
    <organismsDiffer>false</organismsDiffer>
    <experiments>3</experiments>
</comment>
<comment type="interaction">
    <interactant intactId="EBI-11988027">
        <id>Q9NRI5-2</id>
    </interactant>
    <interactant intactId="EBI-743272">
        <id>O75604</id>
        <label>USP2</label>
    </interactant>
    <organismsDiffer>false</organismsDiffer>
    <experiments>3</experiments>
</comment>
<comment type="interaction">
    <interactant intactId="EBI-11988027">
        <id>Q9NRI5-2</id>
    </interactant>
    <interactant intactId="EBI-2555767">
        <id>Q15973</id>
        <label>ZNF124</label>
    </interactant>
    <organismsDiffer>false</organismsDiffer>
    <experiments>3</experiments>
</comment>
<comment type="interaction">
    <interactant intactId="EBI-11988027">
        <id>Q9NRI5-2</id>
    </interactant>
    <interactant intactId="EBI-7254550">
        <id>P36508</id>
        <label>ZNF76</label>
    </interactant>
    <organismsDiffer>false</organismsDiffer>
    <experiments>3</experiments>
</comment>
<comment type="interaction">
    <interactant intactId="EBI-21925300">
        <id>Q9NRI5-3</id>
    </interactant>
    <interactant intactId="EBI-20565696">
        <id>E9Q8Q6</id>
        <label>Ccdc141</label>
    </interactant>
    <organismsDiffer>true</organismsDiffer>
    <experiments>6</experiments>
</comment>
<comment type="subcellular location">
    <subcellularLocation>
        <location evidence="6 12">Cytoplasm</location>
    </subcellularLocation>
    <subcellularLocation>
        <location evidence="10 12">Cytoplasm</location>
        <location evidence="10 12">Cytoskeleton</location>
    </subcellularLocation>
    <subcellularLocation>
        <location evidence="6 12">Mitochondrion</location>
    </subcellularLocation>
    <subcellularLocation>
        <location evidence="8 18">Cytoplasm</location>
        <location evidence="8 18">Cytoskeleton</location>
        <location evidence="8 18">Microtubule organizing center</location>
        <location evidence="8 18">Centrosome</location>
    </subcellularLocation>
    <subcellularLocation>
        <location evidence="1">Postsynaptic density</location>
    </subcellularLocation>
    <text evidence="1 6 12 18">Colocalizes with NDEL1 in the perinuclear region and the centrosome (By similarity). Localizes to punctate cytoplasmic foci which overlap in part with mitochondria (PubMed:12506198, PubMed:15797709). Colocalizes with PCNT at the centrosome (PubMed:18955030).</text>
</comment>
<comment type="alternative products">
    <event type="alternative splicing"/>
    <isoform>
        <id>Q9NRI5-1</id>
        <name>1</name>
        <name>L</name>
        <sequence type="displayed"/>
    </isoform>
    <isoform>
        <id>Q9NRI5-2</id>
        <name>2</name>
        <name>LV</name>
        <sequence type="described" ref="VSP_003849"/>
    </isoform>
    <isoform>
        <id>Q9NRI5-3</id>
        <name>3</name>
        <name>S</name>
        <sequence type="described" ref="VSP_019316 VSP_019317"/>
    </isoform>
    <isoform>
        <id>Q9NRI5-4</id>
        <name>4</name>
        <name>ES</name>
        <sequence type="described" ref="VSP_019314 VSP_019315"/>
    </isoform>
    <isoform>
        <id>Q9NRI5-5</id>
        <name>5</name>
        <name>26</name>
        <sequence type="described" ref="VSP_043214"/>
    </isoform>
    <isoform>
        <id>Q9NRI5-6</id>
        <name>6</name>
        <sequence type="described" ref="VSP_043585 VSP_043586"/>
    </isoform>
    <isoform>
        <id>Q9NRI5-7</id>
        <name>7</name>
        <sequence type="described" ref="VSP_043583 VSP_043584 VSP_043586"/>
    </isoform>
    <isoform>
        <id>Q9NRI5-8</id>
        <name>8</name>
        <sequence type="described" ref="VSP_043587 VSP_043588"/>
    </isoform>
    <isoform>
        <id>Q9NRI5-9</id>
        <name>9</name>
        <sequence type="described" ref="VSP_047530 VSP_047531"/>
    </isoform>
    <isoform>
        <id>Q9NRI5-10</id>
        <name>10</name>
        <sequence type="described" ref="VSP_047526 VSP_047527"/>
    </isoform>
    <isoform>
        <id>Q9NRI5-11</id>
        <name>11</name>
        <sequence type="described" ref="VSP_047525 VSP_047528 VSP_047529"/>
    </isoform>
    <text>Additional isoforms seem to exist. More than 50 different isoforms are produced in the brain.</text>
</comment>
<comment type="tissue specificity">
    <text evidence="14">Ubiquitous. Highly expressed in the dentate gyrus of the hippocampus. Also expressed in the temporal and parahippocampal cortices and cells of the white matter.</text>
</comment>
<comment type="developmental stage">
    <text evidence="14">Expression rises within the dentate gyrus and temporal cortex from the neonatal period to infancy, declines markedly in adolescence, and declines further with aging.</text>
</comment>
<comment type="PTM">
    <text evidence="22">Ubiquitinated. Ubiquitination with 'Lys-48'-linked polyubiquitin chains leads to its proteasomal degradation.</text>
</comment>
<comment type="disease">
    <text>A chromosomal aberration involving DISC1 segregates with schizophrenia and related psychiatric disorders in a large Scottish family. Translocation t(1;11)(q42.1;q14.3). The truncated DISC1 protein produced by this translocation is unable to interact with ATF4, ATF5 and NDEL1.</text>
</comment>
<comment type="disease" evidence="5 9 11 13">
    <disease id="DI-02510">
        <name>Schizophrenia 9</name>
        <acronym>SCZD9</acronym>
        <description>A complex, multifactorial psychotic disorder or group of disorders characterized by disturbances in the form and content of thought (e.g. delusions, hallucinations), in mood (e.g. inappropriate affect), in sense of self and relationship to the external world (e.g. loss of ego boundaries, withdrawal), and in behavior (e.g bizarre or apparently purposeless behavior). Although it affects emotions, it is distinguished from mood disorders in which such disturbances are primary. Similarly, there may be mild impairment of cognitive function, and it is distinguished from the dementias in which disturbed cognitive function is considered primary. Some patients manifest schizophrenic as well as bipolar disorder symptoms and are often given the diagnosis of schizoaffective disorder.</description>
        <dbReference type="MIM" id="604906"/>
    </disease>
    <text>Disease susceptibility is associated with variants affecting the gene represented in this entry.</text>
</comment>
<comment type="miscellaneous">
    <molecule>Isoform 1</molecule>
    <text evidence="27">Non-canonical donor and acceptor splice sites for the last 2 exons.</text>
</comment>
<comment type="miscellaneous">
    <molecule>Isoform 2</molecule>
    <text evidence="27">Non-canonical donor and acceptor splice sites for the last 2 exons.</text>
</comment>
<comment type="sequence caution" evidence="27">
    <conflict type="erroneous initiation">
        <sequence resource="EMBL-CDS" id="BAA32302"/>
    </conflict>
    <text>Extended N-terminus.</text>
</comment>
<proteinExistence type="evidence at protein level"/>
<feature type="chain" id="PRO_0000079916" description="Disrupted in schizophrenia 1 protein">
    <location>
        <begin position="1"/>
        <end position="854"/>
    </location>
</feature>
<feature type="region of interest" description="Interaction with MAP1A" evidence="8">
    <location>
        <begin position="1"/>
        <end position="292"/>
    </location>
</feature>
<feature type="region of interest" description="Disordered" evidence="3">
    <location>
        <begin position="1"/>
        <end position="24"/>
    </location>
</feature>
<feature type="region of interest" description="Disordered" evidence="3">
    <location>
        <begin position="179"/>
        <end position="205"/>
    </location>
</feature>
<feature type="region of interest" description="Disordered" evidence="3">
    <location>
        <begin position="221"/>
        <end position="257"/>
    </location>
</feature>
<feature type="region of interest" description="Disordered" evidence="3">
    <location>
        <begin position="278"/>
        <end position="323"/>
    </location>
</feature>
<feature type="region of interest" description="Interaction with TRAF3IP1" evidence="8">
    <location>
        <begin position="293"/>
        <end position="696"/>
    </location>
</feature>
<feature type="region of interest" description="Required for localization to punctate cytoplasmic foci">
    <location>
        <begin position="440"/>
        <end position="597"/>
    </location>
</feature>
<feature type="region of interest" description="Necessary and sufficient for interaction with PCNT and localization at the centrosome" evidence="18">
    <location>
        <begin position="446"/>
        <end position="854"/>
    </location>
</feature>
<feature type="region of interest" description="Interaction with ATF4 and ATF5" evidence="8">
    <location>
        <begin position="598"/>
        <end position="854"/>
    </location>
</feature>
<feature type="region of interest" description="Disordered" evidence="3">
    <location>
        <begin position="716"/>
        <end position="739"/>
    </location>
</feature>
<feature type="region of interest" description="Interaction with PAFAH1B1" evidence="10">
    <location>
        <begin position="727"/>
        <end position="854"/>
    </location>
</feature>
<feature type="region of interest" description="Interaction with NDEL1">
    <location>
        <begin position="802"/>
        <end position="835"/>
    </location>
</feature>
<feature type="coiled-coil region" evidence="2">
    <location>
        <begin position="366"/>
        <end position="394"/>
    </location>
</feature>
<feature type="coiled-coil region" evidence="2">
    <location>
        <begin position="452"/>
        <end position="505"/>
    </location>
</feature>
<feature type="coiled-coil region" evidence="2">
    <location>
        <begin position="602"/>
        <end position="666"/>
    </location>
</feature>
<feature type="coiled-coil region" evidence="2">
    <location>
        <begin position="802"/>
        <end position="830"/>
    </location>
</feature>
<feature type="short sequence motif" description="Interaction with FBXW7" evidence="22">
    <location>
        <begin position="197"/>
        <end position="203"/>
    </location>
</feature>
<feature type="compositionally biased region" description="Gly residues" evidence="3">
    <location>
        <begin position="1"/>
        <end position="18"/>
    </location>
</feature>
<feature type="compositionally biased region" description="Basic and acidic residues" evidence="3">
    <location>
        <begin position="285"/>
        <end position="295"/>
    </location>
</feature>
<feature type="compositionally biased region" description="Low complexity" evidence="3">
    <location>
        <begin position="296"/>
        <end position="309"/>
    </location>
</feature>
<feature type="cross-link" description="Glycyl lysine isopeptide (Lys-Gly) (interchain with G-Cter in ubiquitin)" evidence="22">
    <location>
        <position position="372"/>
    </location>
</feature>
<feature type="splice variant" id="VSP_047525" description="In isoform 11." evidence="25">
    <location>
        <begin position="23"/>
        <end position="372"/>
    </location>
</feature>
<feature type="splice variant" id="VSP_019314" description="In isoform 4." evidence="24">
    <original>VISLRLKLQKLQEDAVENDD</original>
    <variation>LEPIALDPPWKPRHPEPNSY</variation>
    <location>
        <begin position="350"/>
        <end position="369"/>
    </location>
</feature>
<feature type="splice variant" id="VSP_047526" description="In isoform 10." evidence="25">
    <original>VISLRLK</original>
    <variation>LRRYNKD</variation>
    <location>
        <begin position="350"/>
        <end position="356"/>
    </location>
</feature>
<feature type="splice variant" id="VSP_047527" description="In isoform 10." evidence="25">
    <location>
        <begin position="357"/>
        <end position="854"/>
    </location>
</feature>
<feature type="splice variant" id="VSP_019315" description="In isoform 4." evidence="24">
    <location>
        <begin position="370"/>
        <end position="854"/>
    </location>
</feature>
<feature type="splice variant" id="VSP_043583" description="In isoform 7." evidence="25">
    <original>SLQERIKSLNLSLKE</original>
    <variation>RNKCEGKYYEVHGNT</variation>
    <location>
        <begin position="545"/>
        <end position="559"/>
    </location>
</feature>
<feature type="splice variant" id="VSP_047528" description="In isoform 11." evidence="25">
    <original>SLQERIK</original>
    <variation>RKPFLDG</variation>
    <location>
        <begin position="545"/>
        <end position="551"/>
    </location>
</feature>
<feature type="splice variant" id="VSP_047529" description="In isoform 11." evidence="25">
    <location>
        <begin position="552"/>
        <end position="854"/>
    </location>
</feature>
<feature type="splice variant" id="VSP_043584" description="In isoform 7." evidence="25">
    <location>
        <begin position="560"/>
        <end position="579"/>
    </location>
</feature>
<feature type="splice variant" id="VSP_043585" description="In isoform 6." evidence="25">
    <original>VCMSEKFCSTLRKKVN</original>
    <variation>ETISGRLKTSPRRLDH</variation>
    <location>
        <begin position="564"/>
        <end position="579"/>
    </location>
</feature>
<feature type="splice variant" id="VSP_043586" description="In isoform 6 and isoform 7." evidence="25">
    <location>
        <begin position="580"/>
        <end position="854"/>
    </location>
</feature>
<feature type="splice variant" id="VSP_043214" description="In isoform 5." evidence="25">
    <original>ETSVKENTMKYMETLKNKLCSCKCPLLGKVWEADLEACRLLIQSLQLQEARGSLSVEDERQMDDLEGAAPPIPPRLHSEDKRKTPLKVLEEWKTHLIPSLHCAGGEQKEESYILSAELGEKCEDIGKKLLYLEDQLHTAIHSHDEDLIQSLRRELQMVKETLQAMILQLQPAKEAGEREAAASCMTAGVHEAQA</original>
    <variation>DGVSLCRPVWSAVVRSCSLQPLPPEFKQFSCLSLRSSWDYRCPPPCLANFVFLVEMGFYHVDQTGLKLLTSSDPPSSASQSAGITDMSHCAWPLQ</variation>
    <location>
        <begin position="661"/>
        <end position="854"/>
    </location>
</feature>
<feature type="splice variant" id="VSP_043587" description="In isoform 8." evidence="25">
    <original>ETSVKENTMKYMETLKNKLCSCKCPLLGKVWEADL</original>
    <variation>AASVHCLGKCGKLTWKLVDCLSRAYSSRKPGEACL</variation>
    <location>
        <begin position="661"/>
        <end position="695"/>
    </location>
</feature>
<feature type="splice variant" id="VSP_019316" description="In isoform 3." evidence="24">
    <original>ETSVKENTMKYMETLKNK</original>
    <variation>GYKYCDAESWTQRSQQLA</variation>
    <location>
        <begin position="661"/>
        <end position="678"/>
    </location>
</feature>
<feature type="splice variant" id="VSP_047530" description="In isoform 9." evidence="25">
    <original>ET</original>
    <variation>GR</variation>
    <location>
        <begin position="661"/>
        <end position="662"/>
    </location>
</feature>
<feature type="splice variant" id="VSP_047531" description="In isoform 9." evidence="25">
    <location>
        <begin position="663"/>
        <end position="854"/>
    </location>
</feature>
<feature type="splice variant" id="VSP_019317" description="In isoform 3." evidence="24">
    <location>
        <begin position="679"/>
        <end position="854"/>
    </location>
</feature>
<feature type="splice variant" id="VSP_043588" description="In isoform 8." evidence="25">
    <location>
        <begin position="696"/>
        <end position="854"/>
    </location>
</feature>
<feature type="splice variant" id="VSP_003849" description="In isoform 2." evidence="26">
    <location>
        <begin position="748"/>
        <end position="769"/>
    </location>
</feature>
<feature type="sequence variant" id="VAR_030422" description="In dbSNP:rs3738400." evidence="11">
    <original>G</original>
    <variation>V</variation>
    <location>
        <position position="5"/>
    </location>
</feature>
<feature type="sequence variant" id="VAR_061642" description="In dbSNP:rs56020408.">
    <original>A</original>
    <variation>V</variation>
    <location>
        <position position="116"/>
    </location>
</feature>
<feature type="sequence variant" id="VAR_022437" description="In dbSNP:rs3738401." evidence="4 7 23">
    <original>R</original>
    <variation>Q</variation>
    <location>
        <position position="264"/>
    </location>
</feature>
<feature type="sequence variant" id="VAR_061643" description="In dbSNP:rs55795950.">
    <original>T</original>
    <variation>N</variation>
    <location>
        <position position="328"/>
    </location>
</feature>
<feature type="sequence variant" id="VAR_050954" description="In dbSNP:rs34622148.">
    <original>L</original>
    <variation>F</variation>
    <location>
        <position position="330"/>
    </location>
</feature>
<feature type="sequence variant" id="VAR_061644" description="In dbSNP:rs56229136.">
    <original>G</original>
    <variation>R</variation>
    <location>
        <position position="531"/>
    </location>
</feature>
<feature type="sequence variant" id="VAR_026704" description="Risk factor for schizoaffective disorder; dbSNP:rs6675281." evidence="11">
    <original>L</original>
    <variation>F</variation>
    <location>
        <position position="607"/>
    </location>
</feature>
<feature type="sequence variant" id="VAR_022438" description="In dbSNP:rs821616." evidence="4 13">
    <original>S</original>
    <variation>C</variation>
    <location>
        <position position="704"/>
    </location>
</feature>
<feature type="mutagenesis site" description="Reduced ubiquitination." evidence="22">
    <original>K</original>
    <variation>R</variation>
    <location>
        <position position="372"/>
    </location>
</feature>
<feature type="mutagenesis site" description="Impairs interaction with NDEL1; when associated with P-822." evidence="10">
    <original>L</original>
    <variation>P</variation>
    <location>
        <position position="815"/>
    </location>
</feature>
<feature type="mutagenesis site" description="Impairs interaction with NDEL1; when associated with P-815." evidence="10">
    <original>L</original>
    <variation>P</variation>
    <location>
        <position position="822"/>
    </location>
</feature>
<reference key="1">
    <citation type="journal article" date="2000" name="Hum. Mol. Genet.">
        <title>Disruption of two novel genes by a translocation co-segregating with schizophrenia.</title>
        <authorList>
            <person name="Millar J.K."/>
            <person name="Wilson-Annan J.C."/>
            <person name="Anderson S."/>
            <person name="Christie S."/>
            <person name="Taylor M.S."/>
            <person name="Semple C.A.M."/>
            <person name="Devon R.S."/>
            <person name="St Clair D.M."/>
            <person name="Muir W.J."/>
            <person name="Blackwood D.H.R."/>
            <person name="Porteous D.J."/>
        </authorList>
    </citation>
    <scope>NUCLEOTIDE SEQUENCE [GENOMIC DNA / MRNA] (ISOFORM 1)</scope>
    <scope>VARIANTS GLN-264 AND CYS-704</scope>
</reference>
<reference key="2">
    <citation type="journal article" date="2003" name="Genomics">
        <title>Evolutionary constraints on the Disrupted in Schizophrenia locus.</title>
        <authorList>
            <person name="Taylor M.S."/>
            <person name="Devon R.S."/>
            <person name="Millar J.K."/>
            <person name="Porteous D.J."/>
        </authorList>
    </citation>
    <scope>NUCLEOTIDE SEQUENCE [MRNA] (ISOFORMS 3 AND 4)</scope>
    <scope>VARIANT GLN-264</scope>
    <source>
        <tissue>Fetal heart</tissue>
    </source>
</reference>
<reference key="3">
    <citation type="journal article" date="1997" name="DNA Res.">
        <title>Characterization of cDNA clones in size-fractionated cDNA libraries from human brain.</title>
        <authorList>
            <person name="Seki N."/>
            <person name="Ohira M."/>
            <person name="Nagase T."/>
            <person name="Ishikawa K."/>
            <person name="Miyajima N."/>
            <person name="Nakajima D."/>
            <person name="Nomura N."/>
            <person name="Ohara O."/>
        </authorList>
    </citation>
    <scope>NUCLEOTIDE SEQUENCE [LARGE SCALE MRNA] (ISOFORM 2)</scope>
    <scope>VARIANT GLN-264</scope>
    <source>
        <tissue>Brain</tissue>
    </source>
</reference>
<reference key="4">
    <citation type="journal article" date="2009" name="Proc. Natl. Acad. Sci. U.S.A.">
        <title>DISC1 splice variants are upregulated in schizophrenia and associated with risk polymorphisms.</title>
        <authorList>
            <person name="Nakata K."/>
            <person name="Lipska B.K."/>
            <person name="Hyde T.M."/>
            <person name="Ye T."/>
            <person name="Newburn E.N."/>
            <person name="Morita Y."/>
            <person name="Vakkalanka R."/>
            <person name="Barenboim M."/>
            <person name="Sei Y."/>
            <person name="Weinberger D.R."/>
            <person name="Kleinman J.E."/>
        </authorList>
    </citation>
    <scope>NUCLEOTIDE SEQUENCE [MRNA] (ISOFORMS 5; 6; 7; 8; 9; 10 AND 11)</scope>
    <scope>ALTERNATIVE SPLICING</scope>
    <source>
        <tissue>Brain</tissue>
    </source>
</reference>
<reference key="5">
    <citation type="journal article" date="2006" name="Nature">
        <title>The DNA sequence and biological annotation of human chromosome 1.</title>
        <authorList>
            <person name="Gregory S.G."/>
            <person name="Barlow K.F."/>
            <person name="McLay K.E."/>
            <person name="Kaul R."/>
            <person name="Swarbreck D."/>
            <person name="Dunham A."/>
            <person name="Scott C.E."/>
            <person name="Howe K.L."/>
            <person name="Woodfine K."/>
            <person name="Spencer C.C.A."/>
            <person name="Jones M.C."/>
            <person name="Gillson C."/>
            <person name="Searle S."/>
            <person name="Zhou Y."/>
            <person name="Kokocinski F."/>
            <person name="McDonald L."/>
            <person name="Evans R."/>
            <person name="Phillips K."/>
            <person name="Atkinson A."/>
            <person name="Cooper R."/>
            <person name="Jones C."/>
            <person name="Hall R.E."/>
            <person name="Andrews T.D."/>
            <person name="Lloyd C."/>
            <person name="Ainscough R."/>
            <person name="Almeida J.P."/>
            <person name="Ambrose K.D."/>
            <person name="Anderson F."/>
            <person name="Andrew R.W."/>
            <person name="Ashwell R.I.S."/>
            <person name="Aubin K."/>
            <person name="Babbage A.K."/>
            <person name="Bagguley C.L."/>
            <person name="Bailey J."/>
            <person name="Beasley H."/>
            <person name="Bethel G."/>
            <person name="Bird C.P."/>
            <person name="Bray-Allen S."/>
            <person name="Brown J.Y."/>
            <person name="Brown A.J."/>
            <person name="Buckley D."/>
            <person name="Burton J."/>
            <person name="Bye J."/>
            <person name="Carder C."/>
            <person name="Chapman J.C."/>
            <person name="Clark S.Y."/>
            <person name="Clarke G."/>
            <person name="Clee C."/>
            <person name="Cobley V."/>
            <person name="Collier R.E."/>
            <person name="Corby N."/>
            <person name="Coville G.J."/>
            <person name="Davies J."/>
            <person name="Deadman R."/>
            <person name="Dunn M."/>
            <person name="Earthrowl M."/>
            <person name="Ellington A.G."/>
            <person name="Errington H."/>
            <person name="Frankish A."/>
            <person name="Frankland J."/>
            <person name="French L."/>
            <person name="Garner P."/>
            <person name="Garnett J."/>
            <person name="Gay L."/>
            <person name="Ghori M.R.J."/>
            <person name="Gibson R."/>
            <person name="Gilby L.M."/>
            <person name="Gillett W."/>
            <person name="Glithero R.J."/>
            <person name="Grafham D.V."/>
            <person name="Griffiths C."/>
            <person name="Griffiths-Jones S."/>
            <person name="Grocock R."/>
            <person name="Hammond S."/>
            <person name="Harrison E.S.I."/>
            <person name="Hart E."/>
            <person name="Haugen E."/>
            <person name="Heath P.D."/>
            <person name="Holmes S."/>
            <person name="Holt K."/>
            <person name="Howden P.J."/>
            <person name="Hunt A.R."/>
            <person name="Hunt S.E."/>
            <person name="Hunter G."/>
            <person name="Isherwood J."/>
            <person name="James R."/>
            <person name="Johnson C."/>
            <person name="Johnson D."/>
            <person name="Joy A."/>
            <person name="Kay M."/>
            <person name="Kershaw J.K."/>
            <person name="Kibukawa M."/>
            <person name="Kimberley A.M."/>
            <person name="King A."/>
            <person name="Knights A.J."/>
            <person name="Lad H."/>
            <person name="Laird G."/>
            <person name="Lawlor S."/>
            <person name="Leongamornlert D.A."/>
            <person name="Lloyd D.M."/>
            <person name="Loveland J."/>
            <person name="Lovell J."/>
            <person name="Lush M.J."/>
            <person name="Lyne R."/>
            <person name="Martin S."/>
            <person name="Mashreghi-Mohammadi M."/>
            <person name="Matthews L."/>
            <person name="Matthews N.S.W."/>
            <person name="McLaren S."/>
            <person name="Milne S."/>
            <person name="Mistry S."/>
            <person name="Moore M.J.F."/>
            <person name="Nickerson T."/>
            <person name="O'Dell C.N."/>
            <person name="Oliver K."/>
            <person name="Palmeiri A."/>
            <person name="Palmer S.A."/>
            <person name="Parker A."/>
            <person name="Patel D."/>
            <person name="Pearce A.V."/>
            <person name="Peck A.I."/>
            <person name="Pelan S."/>
            <person name="Phelps K."/>
            <person name="Phillimore B.J."/>
            <person name="Plumb R."/>
            <person name="Rajan J."/>
            <person name="Raymond C."/>
            <person name="Rouse G."/>
            <person name="Saenphimmachak C."/>
            <person name="Sehra H.K."/>
            <person name="Sheridan E."/>
            <person name="Shownkeen R."/>
            <person name="Sims S."/>
            <person name="Skuce C.D."/>
            <person name="Smith M."/>
            <person name="Steward C."/>
            <person name="Subramanian S."/>
            <person name="Sycamore N."/>
            <person name="Tracey A."/>
            <person name="Tromans A."/>
            <person name="Van Helmond Z."/>
            <person name="Wall M."/>
            <person name="Wallis J.M."/>
            <person name="White S."/>
            <person name="Whitehead S.L."/>
            <person name="Wilkinson J.E."/>
            <person name="Willey D.L."/>
            <person name="Williams H."/>
            <person name="Wilming L."/>
            <person name="Wray P.W."/>
            <person name="Wu Z."/>
            <person name="Coulson A."/>
            <person name="Vaudin M."/>
            <person name="Sulston J.E."/>
            <person name="Durbin R.M."/>
            <person name="Hubbard T."/>
            <person name="Wooster R."/>
            <person name="Dunham I."/>
            <person name="Carter N.P."/>
            <person name="McVean G."/>
            <person name="Ross M.T."/>
            <person name="Harrow J."/>
            <person name="Olson M.V."/>
            <person name="Beck S."/>
            <person name="Rogers J."/>
            <person name="Bentley D.R."/>
        </authorList>
    </citation>
    <scope>NUCLEOTIDE SEQUENCE [LARGE SCALE GENOMIC DNA]</scope>
</reference>
<reference key="6">
    <citation type="journal article" date="2001" name="Hum. Mol. Genet.">
        <title>Chromosome 1 loci in Finnish schizophrenia families.</title>
        <authorList>
            <person name="Ekelund J."/>
            <person name="Hovatta I."/>
            <person name="Parker A."/>
            <person name="Paunio T."/>
            <person name="Varilo T."/>
            <person name="Martin R."/>
            <person name="Suhonen J."/>
            <person name="Ellonen P."/>
            <person name="Chan G."/>
            <person name="Sinsheimer J.S."/>
            <person name="Sobel E."/>
            <person name="Juvonen H."/>
            <person name="Arajaervi R."/>
            <person name="Partonen T."/>
            <person name="Suvisaari J."/>
            <person name="Loennqvist J."/>
            <person name="Meyer J."/>
            <person name="Peltonen L."/>
        </authorList>
    </citation>
    <scope>INVOLVEMENT IN SCZD9</scope>
</reference>
<reference key="7">
    <citation type="journal article" date="2003" name="Hum. Mol. Genet.">
        <title>DISC1 (Disrupted-In-Schizophrenia 1) is a centrosome-associated protein that interacts with MAP1A, MIPT3, ATF4/5 and NUDEL: regulation and loss of interaction with mutation.</title>
        <authorList>
            <person name="Morris J.A."/>
            <person name="Kandpal G."/>
            <person name="Ma L."/>
            <person name="Austin C.P."/>
        </authorList>
    </citation>
    <scope>INTERACTION WITH ACTN2; ANKHD1; ATF4; ATF5; CEP63; EIF3S3; MAP1A; MICROTUBULES; NDEL1; RANBP9; SPTBN4; SYNE1 AND TRAF3IP1</scope>
    <scope>SUBCELLULAR LOCATION</scope>
</reference>
<reference key="8">
    <citation type="journal article" date="2003" name="Hum. Mol. Genet.">
        <title>Haplotype transmission analysis provides evidence of association for DISC1 to schizophrenia and suggests sex-dependent effects.</title>
        <authorList>
            <person name="Hennah W."/>
            <person name="Varilo T."/>
            <person name="Kestilae M."/>
            <person name="Paunio T."/>
            <person name="Arajaervi R."/>
            <person name="Haukka J."/>
            <person name="Parker A."/>
            <person name="Martin R."/>
            <person name="Levitzky S."/>
            <person name="Partonen T."/>
            <person name="Meyer J."/>
            <person name="Loennqvist J."/>
            <person name="Peltonen L."/>
            <person name="Ekelund J."/>
        </authorList>
    </citation>
    <scope>INVOLVEMENT IN SCZD9</scope>
</reference>
<reference key="9">
    <citation type="journal article" date="2003" name="Proc. Natl. Acad. Sci. U.S.A.">
        <title>Disrupted-in-Schizophrenia-1 (DISC-1): mutant truncation prevents binding to NudE-like (NUDEL) and inhibits neurite outgrowth.</title>
        <authorList>
            <person name="Ozeki Y."/>
            <person name="Tomoda T."/>
            <person name="Kleiderlein J."/>
            <person name="Kamiya A."/>
            <person name="Bord L."/>
            <person name="Fujii K."/>
            <person name="Okawa M."/>
            <person name="Yamada N."/>
            <person name="Hatten M.E."/>
            <person name="Snyder S.H."/>
            <person name="Ross C.A."/>
            <person name="Sawa A."/>
        </authorList>
    </citation>
    <scope>INTERACTION WITH NDEL1</scope>
    <scope>SUBCELLULAR LOCATION</scope>
</reference>
<reference key="10">
    <citation type="journal article" date="2004" name="Proc. Natl. Acad. Sci. U.S.A.">
        <authorList>
            <person name="Ozeki Y."/>
            <person name="Tomoda T."/>
            <person name="Kleiderlein J."/>
            <person name="Kamiya A."/>
            <person name="Bord L."/>
            <person name="Fujii K."/>
            <person name="Okawa M."/>
            <person name="Yamada N."/>
            <person name="Hatten M.E."/>
            <person name="Snyder S.H."/>
            <person name="Ross C.A."/>
            <person name="Sawa A."/>
        </authorList>
    </citation>
    <scope>ERRATUM OF PUBMED:12506198</scope>
</reference>
<reference key="11">
    <citation type="journal article" date="2004" name="Am. J. Hum. Genet.">
        <title>Disrupted in schizophrenia 1 (DISC1): association with schizophrenia, schizoaffective disorder, and bipolar disorder.</title>
        <authorList>
            <person name="Hodgkinson C.A."/>
            <person name="Goldman D."/>
            <person name="Jaeger J."/>
            <person name="Persaud S."/>
            <person name="Kane J.M."/>
            <person name="Lipsky R.H."/>
            <person name="Malhotra A.K."/>
        </authorList>
    </citation>
    <scope>INVOLVEMENT IN SCZD9</scope>
    <scope>VARIANTS VAL-5 AND PHE-607</scope>
</reference>
<reference key="12">
    <citation type="journal article" date="2004" name="Mol. Cell. Neurosci.">
        <title>Disrupted in Schizophrenia 1 and Nudel form a neurodevelopmentally regulated protein complex: implications for schizophrenia and other major neurological disorders.</title>
        <authorList>
            <person name="Brandon N.J."/>
            <person name="Handford E.J."/>
            <person name="Schurov I."/>
            <person name="Rain J.-C."/>
            <person name="Pelling M."/>
            <person name="Duran-Jimeniz B."/>
            <person name="Camargo L.M."/>
            <person name="Oliver K.R."/>
            <person name="Beher D."/>
            <person name="Shearman M.S."/>
            <person name="Whiting P.J."/>
        </authorList>
    </citation>
    <scope>INTERACTION WITH TUBULIN ALPHA; NDEL1 AND PAFAH1B1</scope>
    <scope>SUBCELLULAR LOCATION</scope>
    <scope>MUTAGENESIS OF LEU-815 AND LEU-822</scope>
</reference>
<reference key="13">
    <citation type="journal article" date="2005" name="Mol. Cell. Neurosci.">
        <title>Subcellular targeting of DISC1 is dependent on a domain independent from the Nudel binding site.</title>
        <authorList>
            <person name="Brandon N.J."/>
            <person name="Schurov I."/>
            <person name="Camargo L.M."/>
            <person name="Handford E.J."/>
            <person name="Duran-Jimeniz B."/>
            <person name="Hunt P."/>
            <person name="Millar J.K."/>
            <person name="Porteous D.J."/>
            <person name="Shearman M.S."/>
            <person name="Whiting P.J."/>
        </authorList>
    </citation>
    <scope>SUBCELLULAR LOCATION</scope>
</reference>
<reference key="14">
    <citation type="journal article" date="2005" name="Proc. Natl. Acad. Sci. U.S.A.">
        <title>Variation in DISC1 affects hippocampal structure and function and increases risk for schizophrenia.</title>
        <authorList>
            <person name="Callicott J.H."/>
            <person name="Straub R.E."/>
            <person name="Pezawas L."/>
            <person name="Egan M.F."/>
            <person name="Mattay V.S."/>
            <person name="Hariri A.R."/>
            <person name="Verchinski B.A."/>
            <person name="Meyer-Lindenberg A."/>
            <person name="Balkissoon R."/>
            <person name="Kolachana B."/>
            <person name="Goldberg T.E."/>
            <person name="Weinberger D.R."/>
        </authorList>
    </citation>
    <scope>INVOLVEMENT IN SCZD9</scope>
    <scope>VARIANT CYS-704</scope>
</reference>
<reference key="15">
    <citation type="journal article" date="2006" name="Hum. Mol. Genet.">
        <title>Expression of DISC1 binding partners is reduced in schizophrenia and associated with DISC1 SNPs.</title>
        <authorList>
            <person name="Lipska B.K."/>
            <person name="Peters T."/>
            <person name="Hyde T.M."/>
            <person name="Halim N."/>
            <person name="Horowitz C."/>
            <person name="Mitkus S."/>
            <person name="Weickert C.S."/>
            <person name="Matsumoto M."/>
            <person name="Sawa A."/>
            <person name="Straub R.E."/>
            <person name="Vakkalanka R."/>
            <person name="Herman M.M."/>
            <person name="Weinberger D.R."/>
            <person name="Kleinman J.E."/>
        </authorList>
    </citation>
    <scope>TISSUE SPECIFICITY</scope>
    <scope>DEVELOPMENTAL STAGE</scope>
</reference>
<reference key="16">
    <citation type="journal article" date="2006" name="Hum. Mol. Genet.">
        <title>DISC1-NDEL1/NUDEL protein interaction, an essential component for neurite outgrowth, is modulated by genetic variations of DISC1.</title>
        <authorList>
            <person name="Kamiya A."/>
            <person name="Tomoda T."/>
            <person name="Chang J."/>
            <person name="Takaki M."/>
            <person name="Zhan C."/>
            <person name="Morita M."/>
            <person name="Cascio M.B."/>
            <person name="Elashvili S."/>
            <person name="Koizumi H."/>
            <person name="Takanezawa Y."/>
            <person name="Dickerson F."/>
            <person name="Yolken R."/>
            <person name="Arai H."/>
            <person name="Sawa A."/>
        </authorList>
    </citation>
    <scope>INTERACTION WITH NDEL1</scope>
</reference>
<reference key="17">
    <citation type="journal article" date="2007" name="J. Pharmacol. Exp. Ther.">
        <title>PDE4B5, a novel, super-short, brain-specific cAMP phosphodiesterase-4 variant whose isoform-specifying N-terminal region is identical to that of cAMP phosphodiesterase-4D6 (PDE4D6).</title>
        <authorList>
            <person name="Cheung Y.F."/>
            <person name="Kan Z."/>
            <person name="Garrett-Engele P."/>
            <person name="Gall I."/>
            <person name="Murdoch H."/>
            <person name="Baillie G.S."/>
            <person name="Camargo L.M."/>
            <person name="Johnson J.M."/>
            <person name="Houslay M.D."/>
            <person name="Castle J.C."/>
        </authorList>
    </citation>
    <scope>INTERACTION WITH PDE4B</scope>
</reference>
<reference key="18">
    <citation type="journal article" date="2007" name="Mol. Psychiatry">
        <title>A novel DISC1-interacting partner DISC1-binding zinc-finger protein: implication in the modulation of DISC1-dependent neurite outgrowth.</title>
        <authorList>
            <person name="Hattori T."/>
            <person name="Baba K."/>
            <person name="Matsuzaki S."/>
            <person name="Honda A."/>
            <person name="Miyoshi K."/>
            <person name="Inoue K."/>
            <person name="Taniguchi M."/>
            <person name="Hashimoto H."/>
            <person name="Shintani N."/>
            <person name="Baba A."/>
            <person name="Shimizu S."/>
            <person name="Yukioka F."/>
            <person name="Kumamoto N."/>
            <person name="Yamaguchi A."/>
            <person name="Tohyama M."/>
            <person name="Katayama T."/>
        </authorList>
    </citation>
    <scope>INTERACTION WITH ZNF365</scope>
</reference>
<reference key="19">
    <citation type="journal article" date="2008" name="Biochem. Biophys. Res. Commun.">
        <title>DISC1-kendrin interaction is involved in centrosomal microtubule network formation.</title>
        <authorList>
            <person name="Shimizu S."/>
            <person name="Matsuzaki S."/>
            <person name="Hattori T."/>
            <person name="Kumamoto N."/>
            <person name="Miyoshi K."/>
            <person name="Katayama T."/>
            <person name="Tohyama M."/>
        </authorList>
    </citation>
    <scope>FUNCTION</scope>
    <scope>INTERACTION WITH PCNT</scope>
    <scope>SUBCELLULAR LOCATION</scope>
</reference>
<reference key="20">
    <citation type="journal article" date="2009" name="Hum. Mol. Genet.">
        <title>Disc1 regulates granule cell migration in the developing hippocampus.</title>
        <authorList>
            <person name="Meyer K.D."/>
            <person name="Morris J.A."/>
        </authorList>
    </citation>
    <scope>FUNCTION</scope>
</reference>
<reference key="21">
    <citation type="journal article" date="2009" name="Cell">
        <title>Disrupted in schizophrenia 1 regulates neuronal progenitor proliferation via modulation of GSK3beta/beta-catenin signaling.</title>
        <authorList>
            <person name="Mao Y."/>
            <person name="Ge X."/>
            <person name="Frank C.L."/>
            <person name="Madison J.M."/>
            <person name="Koehler A.N."/>
            <person name="Doud M.K."/>
            <person name="Tassa C."/>
            <person name="Berry E.M."/>
            <person name="Soda T."/>
            <person name="Singh K.K."/>
            <person name="Biechele T."/>
            <person name="Petryshen T.L."/>
            <person name="Moon R.T."/>
            <person name="Haggarty S.J."/>
            <person name="Tsai L.H."/>
        </authorList>
    </citation>
    <scope>FUNCTION</scope>
</reference>
<reference key="22">
    <citation type="journal article" date="2012" name="J. Biol. Chem.">
        <title>CHCM1/CHCHD6, a novel mitochondrial protein linked to regulation of mitofilin and mitochondrial cristae morphology.</title>
        <authorList>
            <person name="An J."/>
            <person name="Shi J."/>
            <person name="He Q."/>
            <person name="Lui K."/>
            <person name="Liu Y."/>
            <person name="Huang Y."/>
            <person name="Sheikh M.S."/>
        </authorList>
    </citation>
    <scope>INTERACTION WITH CHCHD6</scope>
</reference>
<reference evidence="29" key="23">
    <citation type="journal article" date="2018" name="Mol. Psychiatry">
        <title>FBXW7 regulates DISC1 stability via the ubiquitin-proteosome system.</title>
        <authorList>
            <person name="Yalla K."/>
            <person name="Elliott C."/>
            <person name="Day J.P."/>
            <person name="Findlay J."/>
            <person name="Barratt S."/>
            <person name="Hughes Z.A."/>
            <person name="Wilson L."/>
            <person name="Whiteley E."/>
            <person name="Popiolek M."/>
            <person name="Li Y."/>
            <person name="Dunlop J."/>
            <person name="Killick R."/>
            <person name="Adams D.R."/>
            <person name="Brandon N.J."/>
            <person name="Houslay M.D."/>
            <person name="Hao B."/>
            <person name="Baillie G.S."/>
        </authorList>
    </citation>
    <scope>X-RAY CRYSTALLOGRAPHY (2.60 ANGSTROMS) OF 193-207 IN COMPLEX WITH FBXW7</scope>
    <scope>DOMAIN</scope>
    <scope>UBIQUITINATION AT LYS-372</scope>
    <scope>IDENTIFICATION BY MASS SPECTROMETRY</scope>
    <scope>MUTAGENESIS OF LYS-372</scope>
</reference>
<sequence>MPGGGPQGAPAAAGGGGVSHRAGSRDCLPPAACFRRRRLARRPGYMRSSTGPGIGFLSPAVGTLFRFPGGVSGEESHHSESRARQCGLDSRGLLVRSPVSKSAAAPTVTSVRGTSAHFGIQLRGGTRLPDRLSWPCGPGSAGWQQEFAAMDSSETLDASWEAACSDGARRVRAAGSLPSAELSSNSCSPGCGPEVPPTPPGSHSAFTSSFSFIRLSLGSAGERGEAEGCPPSREAESHCQSPQEMGAKAASLDGPHEDPRCLSRPFSLLATRVSADLAQAARNSSRPERDMHSLPDMDPGSSSSLDPSLAGCGGDGSSGSGDAHSWDTLLRKWEPVLRDCLLRNRRQMEVISLRLKLQKLQEDAVENDDYDKAETLQQRLEDLEQEKISLHFQLPSRQPALSSFLGHLAAQVQAALRRGATQQASGDDTHTPLRMEPRLLEPTAQDSLHVSITRRDWLLQEKQQLQKEIEALQARMFVLEAKDQQLRREIEEQEQQLQWQGCDLTPLVGQLSLGQLQEVSKALQDTLASAGQIPFHAEPPETIRSLQERIKSLNLSLKEITTKVCMSEKFCSTLRKKVNDIETQLPALLEAKMHAISGNHFWTAKDLTEEIRSLTSEREGLEGLLSKLLVLSSRNVKKLGSVKEDYNRLRREVEHQETAYETSVKENTMKYMETLKNKLCSCKCPLLGKVWEADLEACRLLIQSLQLQEARGSLSVEDERQMDDLEGAAPPIPPRLHSEDKRKTPLKVLEEWKTHLIPSLHCAGGEQKEESYILSAELGEKCEDIGKKLLYLEDQLHTAIHSHDEDLIQSLRRELQMVKETLQAMILQLQPAKEAGEREAAASCMTAGVHEAQA</sequence>
<evidence type="ECO:0000250" key="1">
    <source>
        <dbReference type="UniProtKB" id="Q811T9"/>
    </source>
</evidence>
<evidence type="ECO:0000255" key="2"/>
<evidence type="ECO:0000256" key="3">
    <source>
        <dbReference type="SAM" id="MobiDB-lite"/>
    </source>
</evidence>
<evidence type="ECO:0000269" key="4">
    <source>
    </source>
</evidence>
<evidence type="ECO:0000269" key="5">
    <source>
    </source>
</evidence>
<evidence type="ECO:0000269" key="6">
    <source>
    </source>
</evidence>
<evidence type="ECO:0000269" key="7">
    <source>
    </source>
</evidence>
<evidence type="ECO:0000269" key="8">
    <source>
    </source>
</evidence>
<evidence type="ECO:0000269" key="9">
    <source>
    </source>
</evidence>
<evidence type="ECO:0000269" key="10">
    <source>
    </source>
</evidence>
<evidence type="ECO:0000269" key="11">
    <source>
    </source>
</evidence>
<evidence type="ECO:0000269" key="12">
    <source>
    </source>
</evidence>
<evidence type="ECO:0000269" key="13">
    <source>
    </source>
</evidence>
<evidence type="ECO:0000269" key="14">
    <source>
    </source>
</evidence>
<evidence type="ECO:0000269" key="15">
    <source>
    </source>
</evidence>
<evidence type="ECO:0000269" key="16">
    <source>
    </source>
</evidence>
<evidence type="ECO:0000269" key="17">
    <source>
    </source>
</evidence>
<evidence type="ECO:0000269" key="18">
    <source>
    </source>
</evidence>
<evidence type="ECO:0000269" key="19">
    <source>
    </source>
</evidence>
<evidence type="ECO:0000269" key="20">
    <source>
    </source>
</evidence>
<evidence type="ECO:0000269" key="21">
    <source>
    </source>
</evidence>
<evidence type="ECO:0000269" key="22">
    <source>
    </source>
</evidence>
<evidence type="ECO:0000269" key="23">
    <source>
    </source>
</evidence>
<evidence type="ECO:0000303" key="24">
    <source>
    </source>
</evidence>
<evidence type="ECO:0000303" key="25">
    <source>
    </source>
</evidence>
<evidence type="ECO:0000303" key="26">
    <source>
    </source>
</evidence>
<evidence type="ECO:0000305" key="27"/>
<evidence type="ECO:0000312" key="28">
    <source>
        <dbReference type="HGNC" id="HGNC:2888"/>
    </source>
</evidence>
<evidence type="ECO:0007744" key="29">
    <source>
        <dbReference type="PDB" id="5V4B"/>
    </source>
</evidence>
<organism>
    <name type="scientific">Homo sapiens</name>
    <name type="common">Human</name>
    <dbReference type="NCBI Taxonomy" id="9606"/>
    <lineage>
        <taxon>Eukaryota</taxon>
        <taxon>Metazoa</taxon>
        <taxon>Chordata</taxon>
        <taxon>Craniata</taxon>
        <taxon>Vertebrata</taxon>
        <taxon>Euteleostomi</taxon>
        <taxon>Mammalia</taxon>
        <taxon>Eutheria</taxon>
        <taxon>Euarchontoglires</taxon>
        <taxon>Primates</taxon>
        <taxon>Haplorrhini</taxon>
        <taxon>Catarrhini</taxon>
        <taxon>Hominidae</taxon>
        <taxon>Homo</taxon>
    </lineage>
</organism>
<accession>Q9NRI5</accession>
<accession>A6NLH2</accession>
<accession>C4P091</accession>
<accession>C4P095</accession>
<accession>C4P0A1</accession>
<accession>C4P0A3</accession>
<accession>C4P0B3</accession>
<accession>C4P0B6</accession>
<accession>C4P0C1</accession>
<accession>C9J6D0</accession>
<accession>O75045</accession>
<accession>Q5VT44</accession>
<accession>Q5VT45</accession>
<accession>Q8IXJ0</accession>
<accession>Q8IXJ1</accession>
<accession>Q9BX19</accession>
<accession>Q9NRI3</accession>
<accession>Q9NRI4</accession>
<keyword id="KW-0002">3D-structure</keyword>
<keyword id="KW-0025">Alternative splicing</keyword>
<keyword id="KW-0160">Chromosomal rearrangement</keyword>
<keyword id="KW-0175">Coiled coil</keyword>
<keyword id="KW-0963">Cytoplasm</keyword>
<keyword id="KW-0206">Cytoskeleton</keyword>
<keyword id="KW-0217">Developmental protein</keyword>
<keyword id="KW-1017">Isopeptide bond</keyword>
<keyword id="KW-0493">Microtubule</keyword>
<keyword id="KW-0496">Mitochondrion</keyword>
<keyword id="KW-0524">Neurogenesis</keyword>
<keyword id="KW-1267">Proteomics identification</keyword>
<keyword id="KW-1185">Reference proteome</keyword>
<keyword id="KW-1211">Schizophrenia</keyword>
<keyword id="KW-0770">Synapse</keyword>
<keyword id="KW-0832">Ubl conjugation</keyword>
<keyword id="KW-0879">Wnt signaling pathway</keyword>
<gene>
    <name evidence="28" type="primary">DISC1</name>
    <name type="synonym">KIAA0457</name>
</gene>
<name>DISC1_HUMAN</name>
<protein>
    <recommendedName>
        <fullName evidence="27">Disrupted in schizophrenia 1 protein</fullName>
    </recommendedName>
</protein>